<protein>
    <recommendedName>
        <fullName>BAG family molecular chaperone regulator 3</fullName>
        <shortName>BAG-3</shortName>
    </recommendedName>
    <alternativeName>
        <fullName>Bcl-2-associated athanogene 3</fullName>
    </alternativeName>
    <alternativeName>
        <fullName>Bcl-2-binding protein Bis</fullName>
    </alternativeName>
    <alternativeName>
        <fullName>Docking protein CAIR-1</fullName>
    </alternativeName>
</protein>
<dbReference type="EMBL" id="AF095193">
    <property type="protein sequence ID" value="AAD16122.2"/>
    <property type="molecule type" value="mRNA"/>
</dbReference>
<dbReference type="EMBL" id="AF127139">
    <property type="protein sequence ID" value="AAF26839.1"/>
    <property type="molecule type" value="mRNA"/>
</dbReference>
<dbReference type="EMBL" id="AF071218">
    <property type="protein sequence ID" value="AAF69592.2"/>
    <property type="molecule type" value="mRNA"/>
</dbReference>
<dbReference type="EMBL" id="AK291333">
    <property type="protein sequence ID" value="BAF84022.1"/>
    <property type="molecule type" value="mRNA"/>
</dbReference>
<dbReference type="EMBL" id="AL137582">
    <property type="protein sequence ID" value="CAB70824.1"/>
    <property type="molecule type" value="mRNA"/>
</dbReference>
<dbReference type="EMBL" id="BC006418">
    <property type="protein sequence ID" value="AAH06418.1"/>
    <property type="molecule type" value="mRNA"/>
</dbReference>
<dbReference type="EMBL" id="BC014656">
    <property type="protein sequence ID" value="AAH14656.1"/>
    <property type="molecule type" value="mRNA"/>
</dbReference>
<dbReference type="EMBL" id="BC107786">
    <property type="protein sequence ID" value="AAI07787.1"/>
    <property type="molecule type" value="mRNA"/>
</dbReference>
<dbReference type="CCDS" id="CCDS7615.1"/>
<dbReference type="RefSeq" id="NP_004272.2">
    <property type="nucleotide sequence ID" value="NM_004281.3"/>
</dbReference>
<dbReference type="SMR" id="O95817"/>
<dbReference type="BioGRID" id="114907">
    <property type="interactions" value="658"/>
</dbReference>
<dbReference type="CORUM" id="O95817"/>
<dbReference type="DIP" id="DIP-41273N"/>
<dbReference type="FunCoup" id="O95817">
    <property type="interactions" value="1350"/>
</dbReference>
<dbReference type="IntAct" id="O95817">
    <property type="interactions" value="203"/>
</dbReference>
<dbReference type="MINT" id="O95817"/>
<dbReference type="STRING" id="9606.ENSP00000358081"/>
<dbReference type="BindingDB" id="O95817"/>
<dbReference type="ChEMBL" id="CHEMBL5465257"/>
<dbReference type="GlyCosmos" id="O95817">
    <property type="glycosylation" value="1 site, 1 glycan"/>
</dbReference>
<dbReference type="GlyGen" id="O95817">
    <property type="glycosylation" value="18 sites, 1 N-linked glycan (1 site), 1 O-linked glycan (16 sites)"/>
</dbReference>
<dbReference type="iPTMnet" id="O95817"/>
<dbReference type="MetOSite" id="O95817"/>
<dbReference type="PhosphoSitePlus" id="O95817"/>
<dbReference type="BioMuta" id="BAG3"/>
<dbReference type="CPTAC" id="CPTAC-317"/>
<dbReference type="CPTAC" id="CPTAC-318"/>
<dbReference type="jPOST" id="O95817"/>
<dbReference type="MassIVE" id="O95817"/>
<dbReference type="PaxDb" id="9606-ENSP00000358081"/>
<dbReference type="PeptideAtlas" id="O95817"/>
<dbReference type="ProteomicsDB" id="51065"/>
<dbReference type="Pumba" id="O95817"/>
<dbReference type="Antibodypedia" id="18850">
    <property type="antibodies" value="477 antibodies from 39 providers"/>
</dbReference>
<dbReference type="DNASU" id="9531"/>
<dbReference type="Ensembl" id="ENST00000369085.8">
    <property type="protein sequence ID" value="ENSP00000358081.4"/>
    <property type="gene ID" value="ENSG00000151929.10"/>
</dbReference>
<dbReference type="GeneID" id="9531"/>
<dbReference type="KEGG" id="hsa:9531"/>
<dbReference type="MANE-Select" id="ENST00000369085.8">
    <property type="protein sequence ID" value="ENSP00000358081.4"/>
    <property type="RefSeq nucleotide sequence ID" value="NM_004281.4"/>
    <property type="RefSeq protein sequence ID" value="NP_004272.2"/>
</dbReference>
<dbReference type="UCSC" id="uc001lem.4">
    <property type="organism name" value="human"/>
</dbReference>
<dbReference type="AGR" id="HGNC:939"/>
<dbReference type="CTD" id="9531"/>
<dbReference type="DisGeNET" id="9531"/>
<dbReference type="GeneCards" id="BAG3"/>
<dbReference type="GeneReviews" id="BAG3"/>
<dbReference type="HGNC" id="HGNC:939">
    <property type="gene designation" value="BAG3"/>
</dbReference>
<dbReference type="HPA" id="ENSG00000151929">
    <property type="expression patterns" value="Tissue enhanced (skeletal)"/>
</dbReference>
<dbReference type="MalaCards" id="BAG3"/>
<dbReference type="MIM" id="603883">
    <property type="type" value="gene"/>
</dbReference>
<dbReference type="MIM" id="612954">
    <property type="type" value="phenotype"/>
</dbReference>
<dbReference type="MIM" id="613881">
    <property type="type" value="phenotype"/>
</dbReference>
<dbReference type="MIM" id="621094">
    <property type="type" value="phenotype"/>
</dbReference>
<dbReference type="MIM" id="621095">
    <property type="type" value="phenotype"/>
</dbReference>
<dbReference type="neXtProt" id="NX_O95817"/>
<dbReference type="OpenTargets" id="ENSG00000151929"/>
<dbReference type="Orphanet" id="154">
    <property type="disease" value="Familial isolated dilated cardiomyopathy"/>
</dbReference>
<dbReference type="Orphanet" id="199340">
    <property type="disease" value="Muscular dystrophy, Selcen type"/>
</dbReference>
<dbReference type="PharmGKB" id="PA25239"/>
<dbReference type="VEuPathDB" id="HostDB:ENSG00000151929"/>
<dbReference type="eggNOG" id="KOG0940">
    <property type="taxonomic scope" value="Eukaryota"/>
</dbReference>
<dbReference type="eggNOG" id="KOG4361">
    <property type="taxonomic scope" value="Eukaryota"/>
</dbReference>
<dbReference type="GeneTree" id="ENSGT00940000159204"/>
<dbReference type="HOGENOM" id="CLU_034378_0_0_1"/>
<dbReference type="InParanoid" id="O95817"/>
<dbReference type="OMA" id="QKGEPSM"/>
<dbReference type="OrthoDB" id="333905at2759"/>
<dbReference type="PAN-GO" id="O95817">
    <property type="GO annotations" value="9 GO annotations based on evolutionary models"/>
</dbReference>
<dbReference type="PhylomeDB" id="O95817"/>
<dbReference type="TreeFam" id="TF102013"/>
<dbReference type="PathwayCommons" id="O95817"/>
<dbReference type="Reactome" id="R-HSA-3371453">
    <property type="pathway name" value="Regulation of HSF1-mediated heat shock response"/>
</dbReference>
<dbReference type="SignaLink" id="O95817"/>
<dbReference type="SIGNOR" id="O95817"/>
<dbReference type="BioGRID-ORCS" id="9531">
    <property type="hits" value="14 hits in 1150 CRISPR screens"/>
</dbReference>
<dbReference type="CD-CODE" id="DEE660B4">
    <property type="entry name" value="Stress granule"/>
</dbReference>
<dbReference type="CD-CODE" id="FB4E32DD">
    <property type="entry name" value="Presynaptic clusters and postsynaptic densities"/>
</dbReference>
<dbReference type="ChiTaRS" id="BAG3">
    <property type="organism name" value="human"/>
</dbReference>
<dbReference type="GeneWiki" id="BAG3"/>
<dbReference type="GenomeRNAi" id="9531"/>
<dbReference type="Pharos" id="O95817">
    <property type="development level" value="Tbio"/>
</dbReference>
<dbReference type="PRO" id="PR:O95817"/>
<dbReference type="Proteomes" id="UP000005640">
    <property type="component" value="Chromosome 10"/>
</dbReference>
<dbReference type="RNAct" id="O95817">
    <property type="molecule type" value="protein"/>
</dbReference>
<dbReference type="Bgee" id="ENSG00000151929">
    <property type="expression patterns" value="Expressed in gastrocnemius and 206 other cell types or tissues"/>
</dbReference>
<dbReference type="ExpressionAtlas" id="O95817">
    <property type="expression patterns" value="baseline and differential"/>
</dbReference>
<dbReference type="GO" id="GO:0016235">
    <property type="term" value="C:aggresome"/>
    <property type="evidence" value="ECO:0000304"/>
    <property type="project" value="ARUK-UCL"/>
</dbReference>
<dbReference type="GO" id="GO:0036064">
    <property type="term" value="C:ciliary basal body"/>
    <property type="evidence" value="ECO:0000314"/>
    <property type="project" value="HPA"/>
</dbReference>
<dbReference type="GO" id="GO:0005737">
    <property type="term" value="C:cytoplasm"/>
    <property type="evidence" value="ECO:0000314"/>
    <property type="project" value="UniProtKB"/>
</dbReference>
<dbReference type="GO" id="GO:0005829">
    <property type="term" value="C:cytosol"/>
    <property type="evidence" value="ECO:0000314"/>
    <property type="project" value="MGI"/>
</dbReference>
<dbReference type="GO" id="GO:0016020">
    <property type="term" value="C:membrane"/>
    <property type="evidence" value="ECO:0000318"/>
    <property type="project" value="GO_Central"/>
</dbReference>
<dbReference type="GO" id="GO:0005739">
    <property type="term" value="C:mitochondrion"/>
    <property type="evidence" value="ECO:0000314"/>
    <property type="project" value="HPA"/>
</dbReference>
<dbReference type="GO" id="GO:0005654">
    <property type="term" value="C:nucleoplasm"/>
    <property type="evidence" value="ECO:0000314"/>
    <property type="project" value="HPA"/>
</dbReference>
<dbReference type="GO" id="GO:0005634">
    <property type="term" value="C:nucleus"/>
    <property type="evidence" value="ECO:0000314"/>
    <property type="project" value="UniProtKB"/>
</dbReference>
<dbReference type="GO" id="GO:0101031">
    <property type="term" value="C:protein folding chaperone complex"/>
    <property type="evidence" value="ECO:0000314"/>
    <property type="project" value="ARUK-UCL"/>
</dbReference>
<dbReference type="GO" id="GO:0001725">
    <property type="term" value="C:stress fiber"/>
    <property type="evidence" value="ECO:0007669"/>
    <property type="project" value="Ensembl"/>
</dbReference>
<dbReference type="GO" id="GO:0030018">
    <property type="term" value="C:Z disc"/>
    <property type="evidence" value="ECO:0007669"/>
    <property type="project" value="Ensembl"/>
</dbReference>
<dbReference type="GO" id="GO:0000774">
    <property type="term" value="F:adenyl-nucleotide exchange factor activity"/>
    <property type="evidence" value="ECO:0000314"/>
    <property type="project" value="UniProtKB"/>
</dbReference>
<dbReference type="GO" id="GO:0045296">
    <property type="term" value="F:cadherin binding"/>
    <property type="evidence" value="ECO:0007005"/>
    <property type="project" value="BHF-UCL"/>
</dbReference>
<dbReference type="GO" id="GO:0045505">
    <property type="term" value="F:dynein intermediate chain binding"/>
    <property type="evidence" value="ECO:0000303"/>
    <property type="project" value="ARUK-UCL"/>
</dbReference>
<dbReference type="GO" id="GO:0140597">
    <property type="term" value="F:protein carrier chaperone"/>
    <property type="evidence" value="ECO:0000304"/>
    <property type="project" value="ARUK-UCL"/>
</dbReference>
<dbReference type="GO" id="GO:0044877">
    <property type="term" value="F:protein-containing complex binding"/>
    <property type="evidence" value="ECO:0007669"/>
    <property type="project" value="Ensembl"/>
</dbReference>
<dbReference type="GO" id="GO:0051087">
    <property type="term" value="F:protein-folding chaperone binding"/>
    <property type="evidence" value="ECO:0000353"/>
    <property type="project" value="ARUK-UCL"/>
</dbReference>
<dbReference type="GO" id="GO:0070842">
    <property type="term" value="P:aggresome assembly"/>
    <property type="evidence" value="ECO:0000304"/>
    <property type="project" value="ARUK-UCL"/>
</dbReference>
<dbReference type="GO" id="GO:0000045">
    <property type="term" value="P:autophagosome assembly"/>
    <property type="evidence" value="ECO:0007669"/>
    <property type="project" value="Ensembl"/>
</dbReference>
<dbReference type="GO" id="GO:0034605">
    <property type="term" value="P:cellular response to heat"/>
    <property type="evidence" value="ECO:0000314"/>
    <property type="project" value="UniProtKB"/>
</dbReference>
<dbReference type="GO" id="GO:0071260">
    <property type="term" value="P:cellular response to mechanical stimulus"/>
    <property type="evidence" value="ECO:0007669"/>
    <property type="project" value="Ensembl"/>
</dbReference>
<dbReference type="GO" id="GO:0034620">
    <property type="term" value="P:cellular response to unfolded protein"/>
    <property type="evidence" value="ECO:0000315"/>
    <property type="project" value="ARUK-UCL"/>
</dbReference>
<dbReference type="GO" id="GO:0061684">
    <property type="term" value="P:chaperone-mediated autophagy"/>
    <property type="evidence" value="ECO:0007669"/>
    <property type="project" value="Ensembl"/>
</dbReference>
<dbReference type="GO" id="GO:0097192">
    <property type="term" value="P:extrinsic apoptotic signaling pathway in absence of ligand"/>
    <property type="evidence" value="ECO:0007669"/>
    <property type="project" value="Ensembl"/>
</dbReference>
<dbReference type="GO" id="GO:0008625">
    <property type="term" value="P:extrinsic apoptotic signaling pathway via death domain receptors"/>
    <property type="evidence" value="ECO:0000314"/>
    <property type="project" value="MGI"/>
</dbReference>
<dbReference type="GO" id="GO:0046716">
    <property type="term" value="P:muscle cell cellular homeostasis"/>
    <property type="evidence" value="ECO:0000315"/>
    <property type="project" value="ARUK-UCL"/>
</dbReference>
<dbReference type="GO" id="GO:0043066">
    <property type="term" value="P:negative regulation of apoptotic process"/>
    <property type="evidence" value="ECO:0000303"/>
    <property type="project" value="UniProtKB"/>
</dbReference>
<dbReference type="GO" id="GO:1903215">
    <property type="term" value="P:negative regulation of protein targeting to mitochondrion"/>
    <property type="evidence" value="ECO:0007669"/>
    <property type="project" value="Ensembl"/>
</dbReference>
<dbReference type="GO" id="GO:0010664">
    <property type="term" value="P:negative regulation of striated muscle cell apoptotic process"/>
    <property type="evidence" value="ECO:0000315"/>
    <property type="project" value="ARUK-UCL"/>
</dbReference>
<dbReference type="GO" id="GO:1905337">
    <property type="term" value="P:positive regulation of aggrephagy"/>
    <property type="evidence" value="ECO:0000315"/>
    <property type="project" value="ARUK-UCL"/>
</dbReference>
<dbReference type="GO" id="GO:0046827">
    <property type="term" value="P:positive regulation of protein export from nucleus"/>
    <property type="evidence" value="ECO:0000315"/>
    <property type="project" value="UniProtKB"/>
</dbReference>
<dbReference type="GO" id="GO:0042307">
    <property type="term" value="P:positive regulation of protein import into nucleus"/>
    <property type="evidence" value="ECO:0000315"/>
    <property type="project" value="UniProtKB"/>
</dbReference>
<dbReference type="GO" id="GO:0006457">
    <property type="term" value="P:protein folding"/>
    <property type="evidence" value="ECO:0000303"/>
    <property type="project" value="UniProtKB"/>
</dbReference>
<dbReference type="GO" id="GO:0050821">
    <property type="term" value="P:protein stabilization"/>
    <property type="evidence" value="ECO:0000314"/>
    <property type="project" value="ARUK-UCL"/>
</dbReference>
<dbReference type="GO" id="GO:0098840">
    <property type="term" value="P:protein transport along microtubule"/>
    <property type="evidence" value="ECO:0000304"/>
    <property type="project" value="ARUK-UCL"/>
</dbReference>
<dbReference type="GO" id="GO:0021510">
    <property type="term" value="P:spinal cord development"/>
    <property type="evidence" value="ECO:0007669"/>
    <property type="project" value="Ensembl"/>
</dbReference>
<dbReference type="GO" id="GO:0010658">
    <property type="term" value="P:striated muscle cell apoptotic process"/>
    <property type="evidence" value="ECO:0007669"/>
    <property type="project" value="Ensembl"/>
</dbReference>
<dbReference type="CDD" id="cd00201">
    <property type="entry name" value="WW"/>
    <property type="match status" value="1"/>
</dbReference>
<dbReference type="FunFam" id="1.20.58.120:FF:000006">
    <property type="entry name" value="BAG family molecular chaperone regulator 3"/>
    <property type="match status" value="1"/>
</dbReference>
<dbReference type="FunFam" id="2.20.70.10:FF:000007">
    <property type="entry name" value="E3 ubiquitin-protein ligase HECW2 isoform X1"/>
    <property type="match status" value="1"/>
</dbReference>
<dbReference type="Gene3D" id="2.20.70.10">
    <property type="match status" value="1"/>
</dbReference>
<dbReference type="Gene3D" id="1.20.58.120">
    <property type="entry name" value="BAG domain"/>
    <property type="match status" value="1"/>
</dbReference>
<dbReference type="InterPro" id="IPR039773">
    <property type="entry name" value="BAG_chaperone_regulator"/>
</dbReference>
<dbReference type="InterPro" id="IPR036533">
    <property type="entry name" value="BAG_dom_sf"/>
</dbReference>
<dbReference type="InterPro" id="IPR003103">
    <property type="entry name" value="BAG_domain"/>
</dbReference>
<dbReference type="InterPro" id="IPR001202">
    <property type="entry name" value="WW_dom"/>
</dbReference>
<dbReference type="InterPro" id="IPR036020">
    <property type="entry name" value="WW_dom_sf"/>
</dbReference>
<dbReference type="PANTHER" id="PTHR12329:SF12">
    <property type="entry name" value="BAG FAMILY MOLECULAR CHAPERONE REGULATOR 3"/>
    <property type="match status" value="1"/>
</dbReference>
<dbReference type="PANTHER" id="PTHR12329">
    <property type="entry name" value="BCL2-ASSOCIATED ATHANOGENE"/>
    <property type="match status" value="1"/>
</dbReference>
<dbReference type="Pfam" id="PF02179">
    <property type="entry name" value="BAG"/>
    <property type="match status" value="1"/>
</dbReference>
<dbReference type="Pfam" id="PF00397">
    <property type="entry name" value="WW"/>
    <property type="match status" value="1"/>
</dbReference>
<dbReference type="SMART" id="SM00264">
    <property type="entry name" value="BAG"/>
    <property type="match status" value="1"/>
</dbReference>
<dbReference type="SMART" id="SM00456">
    <property type="entry name" value="WW"/>
    <property type="match status" value="1"/>
</dbReference>
<dbReference type="SUPFAM" id="SSF63491">
    <property type="entry name" value="BAG domain"/>
    <property type="match status" value="1"/>
</dbReference>
<dbReference type="SUPFAM" id="SSF51045">
    <property type="entry name" value="WW domain"/>
    <property type="match status" value="1"/>
</dbReference>
<dbReference type="PROSITE" id="PS51035">
    <property type="entry name" value="BAG"/>
    <property type="match status" value="1"/>
</dbReference>
<dbReference type="PROSITE" id="PS01159">
    <property type="entry name" value="WW_DOMAIN_1"/>
    <property type="match status" value="1"/>
</dbReference>
<dbReference type="PROSITE" id="PS50020">
    <property type="entry name" value="WW_DOMAIN_2"/>
    <property type="match status" value="1"/>
</dbReference>
<sequence length="575" mass="61595">MSAATHSPMMQVASGNGDRDPLPPGWEIKIDPQTGWPFFVDHNSRTTTWNDPRVPSEGPKETPSSANGPSREGSRLPPAREGHPVYPQLRPGYIPIPVLHEGAENRQVHPFHVYPQPGMQRFRTEAAAAAPQRSQSPLRGMPETTQPDKQCGQVAAAAAAQPPASHGPERSQSPAASDCSSSSSSASLPSSGRSSLGSHQLPRGYISIPVIHEQNVTRPAAQPSFHQAQKTHYPAQQGEYQTHQPVYHKIQGDDWEPRPLRAASPFRSSVQGASSREGSPARSSTPLHSPSPIRVHTVVDRPQQPMTHRETAPVSQPENKPESKPGPVGPELPPGHIPIQVIRKEVDSKPVSQKPPPPSEKVEVKVPPAPVPCPPPSPGPSAVPSSPKSVATEERAAPSTAPAEATPPKPGEAEAPPKHPGVLKVEAILEKVQGLEQAVDNFEGKKTDKKYLMIEEYLTKELLALDSVDPEGRADVRQARRDGVRKVQTILEKLEQKAIDVPGQVQVYELQPSNLEADQPLQAIMEMGAVAADKGKKNAGNAEDPHTETQQPEATAAATSNPSSMTDTPGNPAAP</sequence>
<name>BAG3_HUMAN</name>
<organism>
    <name type="scientific">Homo sapiens</name>
    <name type="common">Human</name>
    <dbReference type="NCBI Taxonomy" id="9606"/>
    <lineage>
        <taxon>Eukaryota</taxon>
        <taxon>Metazoa</taxon>
        <taxon>Chordata</taxon>
        <taxon>Craniata</taxon>
        <taxon>Vertebrata</taxon>
        <taxon>Euteleostomi</taxon>
        <taxon>Mammalia</taxon>
        <taxon>Eutheria</taxon>
        <taxon>Euarchontoglires</taxon>
        <taxon>Primates</taxon>
        <taxon>Haplorrhini</taxon>
        <taxon>Catarrhini</taxon>
        <taxon>Hominidae</taxon>
        <taxon>Homo</taxon>
    </lineage>
</organism>
<reference key="1">
    <citation type="journal article" date="1999" name="J. Biol. Chem.">
        <title>An evolutionarily conserved family of Hsp70/Hsc70 molecular chaperone regulators.</title>
        <authorList>
            <person name="Takayama S."/>
            <person name="Xie Z."/>
            <person name="Reed J.C."/>
        </authorList>
    </citation>
    <scope>NUCLEOTIDE SEQUENCE [MRNA]</scope>
    <scope>FUNCTION</scope>
    <scope>INTERACTION WITH HSP70/HSC70 CHAPERONES</scope>
</reference>
<reference key="2">
    <citation type="journal article" date="1999" name="Oncogene">
        <title>Bis, a Bcl-2-binding protein that synergizes with Bcl-2 in preventing cell death.</title>
        <authorList>
            <person name="Lee J.H."/>
            <person name="Takahashi T."/>
            <person name="Yasuhara N."/>
            <person name="Inazawa J."/>
            <person name="Kamada S."/>
            <person name="Tsujimoto Y."/>
        </authorList>
    </citation>
    <scope>NUCLEOTIDE SEQUENCE [MRNA]</scope>
    <scope>VARIANT ARG-151</scope>
    <scope>FUNCTION</scope>
    <scope>INTERACTION WITH BCL2</scope>
</reference>
<reference key="3">
    <citation type="journal article" date="2000" name="Oncogene">
        <title>CAIR-1/BAG-3 forms an EGF-regulated ternary complex with phospholipase C-gamma and Hsp70/Hsc70.</title>
        <authorList>
            <person name="Doong H."/>
            <person name="Price J."/>
            <person name="Kim Y.S."/>
            <person name="Gasbarre C."/>
            <person name="Probst J."/>
            <person name="Liotta L.A."/>
            <person name="Blanchette J."/>
            <person name="Rizzo K."/>
            <person name="Kohn E."/>
        </authorList>
    </citation>
    <scope>NUCLEOTIDE SEQUENCE [MRNA]</scope>
    <scope>INTERACTION WITH PHOSPHOLIPASE C-GAMMA PROTEINS</scope>
</reference>
<reference key="4">
    <citation type="journal article" date="2004" name="Nat. Genet.">
        <title>Complete sequencing and characterization of 21,243 full-length human cDNAs.</title>
        <authorList>
            <person name="Ota T."/>
            <person name="Suzuki Y."/>
            <person name="Nishikawa T."/>
            <person name="Otsuki T."/>
            <person name="Sugiyama T."/>
            <person name="Irie R."/>
            <person name="Wakamatsu A."/>
            <person name="Hayashi K."/>
            <person name="Sato H."/>
            <person name="Nagai K."/>
            <person name="Kimura K."/>
            <person name="Makita H."/>
            <person name="Sekine M."/>
            <person name="Obayashi M."/>
            <person name="Nishi T."/>
            <person name="Shibahara T."/>
            <person name="Tanaka T."/>
            <person name="Ishii S."/>
            <person name="Yamamoto J."/>
            <person name="Saito K."/>
            <person name="Kawai Y."/>
            <person name="Isono Y."/>
            <person name="Nakamura Y."/>
            <person name="Nagahari K."/>
            <person name="Murakami K."/>
            <person name="Yasuda T."/>
            <person name="Iwayanagi T."/>
            <person name="Wagatsuma M."/>
            <person name="Shiratori A."/>
            <person name="Sudo H."/>
            <person name="Hosoiri T."/>
            <person name="Kaku Y."/>
            <person name="Kodaira H."/>
            <person name="Kondo H."/>
            <person name="Sugawara M."/>
            <person name="Takahashi M."/>
            <person name="Kanda K."/>
            <person name="Yokoi T."/>
            <person name="Furuya T."/>
            <person name="Kikkawa E."/>
            <person name="Omura Y."/>
            <person name="Abe K."/>
            <person name="Kamihara K."/>
            <person name="Katsuta N."/>
            <person name="Sato K."/>
            <person name="Tanikawa M."/>
            <person name="Yamazaki M."/>
            <person name="Ninomiya K."/>
            <person name="Ishibashi T."/>
            <person name="Yamashita H."/>
            <person name="Murakawa K."/>
            <person name="Fujimori K."/>
            <person name="Tanai H."/>
            <person name="Kimata M."/>
            <person name="Watanabe M."/>
            <person name="Hiraoka S."/>
            <person name="Chiba Y."/>
            <person name="Ishida S."/>
            <person name="Ono Y."/>
            <person name="Takiguchi S."/>
            <person name="Watanabe S."/>
            <person name="Yosida M."/>
            <person name="Hotuta T."/>
            <person name="Kusano J."/>
            <person name="Kanehori K."/>
            <person name="Takahashi-Fujii A."/>
            <person name="Hara H."/>
            <person name="Tanase T.-O."/>
            <person name="Nomura Y."/>
            <person name="Togiya S."/>
            <person name="Komai F."/>
            <person name="Hara R."/>
            <person name="Takeuchi K."/>
            <person name="Arita M."/>
            <person name="Imose N."/>
            <person name="Musashino K."/>
            <person name="Yuuki H."/>
            <person name="Oshima A."/>
            <person name="Sasaki N."/>
            <person name="Aotsuka S."/>
            <person name="Yoshikawa Y."/>
            <person name="Matsunawa H."/>
            <person name="Ichihara T."/>
            <person name="Shiohata N."/>
            <person name="Sano S."/>
            <person name="Moriya S."/>
            <person name="Momiyama H."/>
            <person name="Satoh N."/>
            <person name="Takami S."/>
            <person name="Terashima Y."/>
            <person name="Suzuki O."/>
            <person name="Nakagawa S."/>
            <person name="Senoh A."/>
            <person name="Mizoguchi H."/>
            <person name="Goto Y."/>
            <person name="Shimizu F."/>
            <person name="Wakebe H."/>
            <person name="Hishigaki H."/>
            <person name="Watanabe T."/>
            <person name="Sugiyama A."/>
            <person name="Takemoto M."/>
            <person name="Kawakami B."/>
            <person name="Yamazaki M."/>
            <person name="Watanabe K."/>
            <person name="Kumagai A."/>
            <person name="Itakura S."/>
            <person name="Fukuzumi Y."/>
            <person name="Fujimori Y."/>
            <person name="Komiyama M."/>
            <person name="Tashiro H."/>
            <person name="Tanigami A."/>
            <person name="Fujiwara T."/>
            <person name="Ono T."/>
            <person name="Yamada K."/>
            <person name="Fujii Y."/>
            <person name="Ozaki K."/>
            <person name="Hirao M."/>
            <person name="Ohmori Y."/>
            <person name="Kawabata A."/>
            <person name="Hikiji T."/>
            <person name="Kobatake N."/>
            <person name="Inagaki H."/>
            <person name="Ikema Y."/>
            <person name="Okamoto S."/>
            <person name="Okitani R."/>
            <person name="Kawakami T."/>
            <person name="Noguchi S."/>
            <person name="Itoh T."/>
            <person name="Shigeta K."/>
            <person name="Senba T."/>
            <person name="Matsumura K."/>
            <person name="Nakajima Y."/>
            <person name="Mizuno T."/>
            <person name="Morinaga M."/>
            <person name="Sasaki M."/>
            <person name="Togashi T."/>
            <person name="Oyama M."/>
            <person name="Hata H."/>
            <person name="Watanabe M."/>
            <person name="Komatsu T."/>
            <person name="Mizushima-Sugano J."/>
            <person name="Satoh T."/>
            <person name="Shirai Y."/>
            <person name="Takahashi Y."/>
            <person name="Nakagawa K."/>
            <person name="Okumura K."/>
            <person name="Nagase T."/>
            <person name="Nomura N."/>
            <person name="Kikuchi H."/>
            <person name="Masuho Y."/>
            <person name="Yamashita R."/>
            <person name="Nakai K."/>
            <person name="Yada T."/>
            <person name="Nakamura Y."/>
            <person name="Ohara O."/>
            <person name="Isogai T."/>
            <person name="Sugano S."/>
        </authorList>
    </citation>
    <scope>NUCLEOTIDE SEQUENCE [LARGE SCALE MRNA]</scope>
    <source>
        <tissue>Tongue</tissue>
    </source>
</reference>
<reference key="5">
    <citation type="journal article" date="2007" name="BMC Genomics">
        <title>The full-ORF clone resource of the German cDNA consortium.</title>
        <authorList>
            <person name="Bechtel S."/>
            <person name="Rosenfelder H."/>
            <person name="Duda A."/>
            <person name="Schmidt C.P."/>
            <person name="Ernst U."/>
            <person name="Wellenreuther R."/>
            <person name="Mehrle A."/>
            <person name="Schuster C."/>
            <person name="Bahr A."/>
            <person name="Bloecker H."/>
            <person name="Heubner D."/>
            <person name="Hoerlein A."/>
            <person name="Michel G."/>
            <person name="Wedler H."/>
            <person name="Koehrer K."/>
            <person name="Ottenwaelder B."/>
            <person name="Poustka A."/>
            <person name="Wiemann S."/>
            <person name="Schupp I."/>
        </authorList>
    </citation>
    <scope>NUCLEOTIDE SEQUENCE [LARGE SCALE MRNA]</scope>
    <source>
        <tissue>Testis</tissue>
    </source>
</reference>
<reference key="6">
    <citation type="journal article" date="2004" name="Genome Res.">
        <title>The status, quality, and expansion of the NIH full-length cDNA project: the Mammalian Gene Collection (MGC).</title>
        <authorList>
            <consortium name="The MGC Project Team"/>
        </authorList>
    </citation>
    <scope>NUCLEOTIDE SEQUENCE [LARGE SCALE MRNA]</scope>
    <source>
        <tissue>Brain</tissue>
        <tissue>Lung</tissue>
        <tissue>Placenta</tissue>
    </source>
</reference>
<reference key="7">
    <citation type="journal article" date="2006" name="Cell">
        <title>Global, in vivo, and site-specific phosphorylation dynamics in signaling networks.</title>
        <authorList>
            <person name="Olsen J.V."/>
            <person name="Blagoev B."/>
            <person name="Gnad F."/>
            <person name="Macek B."/>
            <person name="Kumar C."/>
            <person name="Mortensen P."/>
            <person name="Mann M."/>
        </authorList>
    </citation>
    <scope>IDENTIFICATION BY MASS SPECTROMETRY [LARGE SCALE ANALYSIS]</scope>
    <source>
        <tissue>Cervix carcinoma</tissue>
    </source>
</reference>
<reference key="8">
    <citation type="journal article" date="2008" name="J. Proteome Res.">
        <title>Combining protein-based IMAC, peptide-based IMAC, and MudPIT for efficient phosphoproteomic analysis.</title>
        <authorList>
            <person name="Cantin G.T."/>
            <person name="Yi W."/>
            <person name="Lu B."/>
            <person name="Park S.K."/>
            <person name="Xu T."/>
            <person name="Lee J.-D."/>
            <person name="Yates J.R. III"/>
        </authorList>
    </citation>
    <scope>IDENTIFICATION BY MASS SPECTROMETRY [LARGE SCALE ANALYSIS]</scope>
    <source>
        <tissue>Cervix carcinoma</tissue>
    </source>
</reference>
<reference key="9">
    <citation type="journal article" date="2008" name="Mol. Cell">
        <title>Kinase-selective enrichment enables quantitative phosphoproteomics of the kinome across the cell cycle.</title>
        <authorList>
            <person name="Daub H."/>
            <person name="Olsen J.V."/>
            <person name="Bairlein M."/>
            <person name="Gnad F."/>
            <person name="Oppermann F.S."/>
            <person name="Korner R."/>
            <person name="Greff Z."/>
            <person name="Keri G."/>
            <person name="Stemmann O."/>
            <person name="Mann M."/>
        </authorList>
    </citation>
    <scope>PHOSPHORYLATION [LARGE SCALE ANALYSIS] AT SER-377</scope>
    <scope>IDENTIFICATION BY MASS SPECTROMETRY [LARGE SCALE ANALYSIS]</scope>
    <source>
        <tissue>Cervix carcinoma</tissue>
    </source>
</reference>
<reference key="10">
    <citation type="journal article" date="2008" name="Proc. Natl. Acad. Sci. U.S.A.">
        <title>A quantitative atlas of mitotic phosphorylation.</title>
        <authorList>
            <person name="Dephoure N."/>
            <person name="Zhou C."/>
            <person name="Villen J."/>
            <person name="Beausoleil S.A."/>
            <person name="Bakalarski C.E."/>
            <person name="Elledge S.J."/>
            <person name="Gygi S.P."/>
        </authorList>
    </citation>
    <scope>PHOSPHORYLATION [LARGE SCALE ANALYSIS] AT SER-274; SER-275; SER-279; THR-285; SER-289; SER-291; SER-377; SER-386 AND THR-406</scope>
    <scope>IDENTIFICATION BY MASS SPECTROMETRY [LARGE SCALE ANALYSIS]</scope>
    <source>
        <tissue>Cervix carcinoma</tissue>
    </source>
</reference>
<reference key="11">
    <citation type="journal article" date="2009" name="Anal. Chem.">
        <title>Lys-N and trypsin cover complementary parts of the phosphoproteome in a refined SCX-based approach.</title>
        <authorList>
            <person name="Gauci S."/>
            <person name="Helbig A.O."/>
            <person name="Slijper M."/>
            <person name="Krijgsveld J."/>
            <person name="Heck A.J."/>
            <person name="Mohammed S."/>
        </authorList>
    </citation>
    <scope>IDENTIFICATION BY MASS SPECTROMETRY [LARGE SCALE ANALYSIS]</scope>
</reference>
<reference key="12">
    <citation type="journal article" date="2010" name="Curr. Biol.">
        <title>Chaperone-assisted selective autophagy is essential for muscle maintenance.</title>
        <authorList>
            <person name="Arndt V."/>
            <person name="Dick N."/>
            <person name="Tawo R."/>
            <person name="Dreiseidler M."/>
            <person name="Wenzel D."/>
            <person name="Hesse M."/>
            <person name="Fuerst D.O."/>
            <person name="Saftig P."/>
            <person name="Saint R."/>
            <person name="Fleischmann B.K."/>
            <person name="Hoch M."/>
            <person name="Hoehfeld J."/>
        </authorList>
    </citation>
    <scope>INTERACTION WITH HSPA8; HSPB8 AND STUB1 IN CASA COMPLEX</scope>
</reference>
<reference key="13">
    <citation type="journal article" date="2010" name="Sci. Signal.">
        <title>Quantitative phosphoproteomics reveals widespread full phosphorylation site occupancy during mitosis.</title>
        <authorList>
            <person name="Olsen J.V."/>
            <person name="Vermeulen M."/>
            <person name="Santamaria A."/>
            <person name="Kumar C."/>
            <person name="Miller M.L."/>
            <person name="Jensen L.J."/>
            <person name="Gnad F."/>
            <person name="Cox J."/>
            <person name="Jensen T.S."/>
            <person name="Nigg E.A."/>
            <person name="Brunak S."/>
            <person name="Mann M."/>
        </authorList>
    </citation>
    <scope>ACETYLATION [LARGE SCALE ANALYSIS] AT SER-2</scope>
    <scope>PHOSPHORYLATION [LARGE SCALE ANALYSIS] AT SER-198; SER-289; SER-377; SER-386 AND THR-406</scope>
    <scope>CLEAVAGE OF INITIATOR METHIONINE [LARGE SCALE ANALYSIS]</scope>
    <scope>IDENTIFICATION BY MASS SPECTROMETRY [LARGE SCALE ANALYSIS]</scope>
    <source>
        <tissue>Cervix carcinoma</tissue>
    </source>
</reference>
<reference key="14">
    <citation type="journal article" date="2011" name="BMC Syst. Biol.">
        <title>Initial characterization of the human central proteome.</title>
        <authorList>
            <person name="Burkard T.R."/>
            <person name="Planyavsky M."/>
            <person name="Kaupe I."/>
            <person name="Breitwieser F.P."/>
            <person name="Buerckstuemmer T."/>
            <person name="Bennett K.L."/>
            <person name="Superti-Furga G."/>
            <person name="Colinge J."/>
        </authorList>
    </citation>
    <scope>IDENTIFICATION BY MASS SPECTROMETRY [LARGE SCALE ANALYSIS]</scope>
</reference>
<reference key="15">
    <citation type="journal article" date="2012" name="Nat. Genet.">
        <title>Mutations affecting the cytoplasmic functions of the co-chaperone DNAJB6 cause limb-girdle muscular dystrophy.</title>
        <authorList>
            <person name="Sarparanta J."/>
            <person name="Jonson P.H."/>
            <person name="Golzio C."/>
            <person name="Sandell S."/>
            <person name="Luque H."/>
            <person name="Screen M."/>
            <person name="McDonald K."/>
            <person name="Stajich J.M."/>
            <person name="Mahjneh I."/>
            <person name="Vihola A."/>
            <person name="Raheem O."/>
            <person name="Penttila S."/>
            <person name="Lehtinen S."/>
            <person name="Huovinen S."/>
            <person name="Palmio J."/>
            <person name="Tasca G."/>
            <person name="Ricci E."/>
            <person name="Hackman P."/>
            <person name="Hauser M."/>
            <person name="Katsanis N."/>
            <person name="Udd B."/>
        </authorList>
    </citation>
    <scope>INTERACTION WITH DNAJB6</scope>
</reference>
<reference key="16">
    <citation type="journal article" date="2013" name="Curr. Biol.">
        <title>Cellular mechanotransduction relies on tension-induced and chaperone-assisted autophagy.</title>
        <authorList>
            <person name="Ulbricht A."/>
            <person name="Eppler F.J."/>
            <person name="Tapia V.E."/>
            <person name="van der Ven P.F."/>
            <person name="Hampe N."/>
            <person name="Hersch N."/>
            <person name="Vakeel P."/>
            <person name="Stadel D."/>
            <person name="Haas A."/>
            <person name="Saftig P."/>
            <person name="Behrends C."/>
            <person name="Fuerst D.O."/>
            <person name="Volkmer R."/>
            <person name="Hoffmann B."/>
            <person name="Kolanus W."/>
            <person name="Hoehfeld J."/>
        </authorList>
    </citation>
    <scope>INTERACTION WITH SYNPO2</scope>
</reference>
<reference key="17">
    <citation type="journal article" date="2013" name="J. Proteome Res.">
        <title>Toward a comprehensive characterization of a human cancer cell phosphoproteome.</title>
        <authorList>
            <person name="Zhou H."/>
            <person name="Di Palma S."/>
            <person name="Preisinger C."/>
            <person name="Peng M."/>
            <person name="Polat A.N."/>
            <person name="Heck A.J."/>
            <person name="Mohammed S."/>
        </authorList>
    </citation>
    <scope>PHOSPHORYLATION [LARGE SCALE ANALYSIS] AT SER-173; SER-269; SER-275; SER-279; THR-285; SER-289; SER-291; SER-377 AND THR-406</scope>
    <scope>IDENTIFICATION BY MASS SPECTROMETRY [LARGE SCALE ANALYSIS]</scope>
    <source>
        <tissue>Cervix carcinoma</tissue>
        <tissue>Erythroleukemia</tissue>
    </source>
</reference>
<reference key="18">
    <citation type="journal article" date="2014" name="J. Biol. Chem.">
        <title>Binding of human nucleotide exchange factors to heat shock protein 70 (Hsp70) generates functionally distinct complexes in vitro.</title>
        <authorList>
            <person name="Rauch J.N."/>
            <person name="Gestwicki J.E."/>
        </authorList>
    </citation>
    <scope>FUNCTION</scope>
    <scope>INTERACTION WITH HSPA1A; HSPA1B AND HSPA8</scope>
</reference>
<reference key="19">
    <citation type="journal article" date="2014" name="J. Proteomics">
        <title>An enzyme assisted RP-RPLC approach for in-depth analysis of human liver phosphoproteome.</title>
        <authorList>
            <person name="Bian Y."/>
            <person name="Song C."/>
            <person name="Cheng K."/>
            <person name="Dong M."/>
            <person name="Wang F."/>
            <person name="Huang J."/>
            <person name="Sun D."/>
            <person name="Wang L."/>
            <person name="Ye M."/>
            <person name="Zou H."/>
        </authorList>
    </citation>
    <scope>PHOSPHORYLATION [LARGE SCALE ANALYSIS] AT SER-377 AND SER-385</scope>
    <scope>IDENTIFICATION BY MASS SPECTROMETRY [LARGE SCALE ANALYSIS]</scope>
    <source>
        <tissue>Liver</tissue>
    </source>
</reference>
<reference key="20">
    <citation type="journal article" date="2014" name="Proc. Natl. Acad. Sci. U.S.A.">
        <title>Mapping of SUMO sites and analysis of SUMOylation changes induced by external stimuli.</title>
        <authorList>
            <person name="Impens F."/>
            <person name="Radoshevich L."/>
            <person name="Cossart P."/>
            <person name="Ribet D."/>
        </authorList>
    </citation>
    <scope>SUMOYLATION [LARGE SCALE ANALYSIS] AT LYS-445</scope>
    <scope>IDENTIFICATION BY MASS SPECTROMETRY [LARGE SCALE ANALYSIS]</scope>
</reference>
<reference key="21">
    <citation type="journal article" date="2015" name="Biochem. Biophys. Res. Commun.">
        <title>BAG3 affects the nucleocytoplasmic shuttling of HSF1 upon heat stress.</title>
        <authorList>
            <person name="Jin Y.H."/>
            <person name="Ahn S.G."/>
            <person name="Kim S.A."/>
        </authorList>
    </citation>
    <scope>FUNCTION</scope>
    <scope>INTERACTION WITH HSF1</scope>
    <scope>SUBCELLULAR LOCATION</scope>
</reference>
<reference key="22">
    <citation type="journal article" date="2016" name="J. Biol. Chem.">
        <title>Non-canonical interactions between heat shock cognate protein 70 (Hsc70) and Bcl2-associated anthanogene (BAG) co-chaperones are important for client release.</title>
        <authorList>
            <person name="Rauch J.N."/>
            <person name="Zuiderweg E.R."/>
            <person name="Gestwicki J.E."/>
        </authorList>
    </citation>
    <scope>FUNCTION</scope>
    <scope>INTERACTION WITH HSPA8</scope>
    <scope>MUTAGENESIS OF 480-ARG-LYS-481</scope>
</reference>
<reference key="23">
    <citation type="journal article" date="2017" name="J. Mol. Biol.">
        <title>BAG3 is a modular, scaffolding protein that physically links heat shock protein 70 (Hsp70) to the small heat shock proteins.</title>
        <authorList>
            <person name="Rauch J.N."/>
            <person name="Tse E."/>
            <person name="Freilich R."/>
            <person name="Mok S.A."/>
            <person name="Makley L.N."/>
            <person name="Southworth D.R."/>
            <person name="Gestwicki J.E."/>
        </authorList>
    </citation>
    <scope>FUNCTION</scope>
    <scope>INTERACTION WITH HSPA1A/HSP70 AND HSPB8</scope>
    <scope>DOMAIN</scope>
</reference>
<reference key="24">
    <citation type="journal article" date="2017" name="Hum. Mutat.">
        <title>Axonal Neuropathies due to Mutations in Small Heat Shock Proteins: Clinical, Genetic, and Functional Insights into Novel Mutations.</title>
        <authorList>
            <person name="Echaniz-Laguna A."/>
            <person name="Geuens T."/>
            <person name="Petiot P."/>
            <person name="Pereon Y."/>
            <person name="Adriaenssens E."/>
            <person name="Haidar M."/>
            <person name="Capponi S."/>
            <person name="Maisonobe T."/>
            <person name="Fournier E."/>
            <person name="Dubourg O."/>
            <person name="Degos B."/>
            <person name="Salachas F."/>
            <person name="Lenglet T."/>
            <person name="Eymard B."/>
            <person name="Delmont E."/>
            <person name="Pouget J."/>
            <person name="Juntas Morales R."/>
            <person name="Goizet C."/>
            <person name="Latour P."/>
            <person name="Timmerman V."/>
            <person name="Stojkovic T."/>
        </authorList>
    </citation>
    <scope>INTERACTION WITH HSPB8</scope>
</reference>
<reference key="25">
    <citation type="journal article" date="2017" name="Nat. Struct. Mol. Biol.">
        <title>Site-specific mapping of the human SUMO proteome reveals co-modification with phosphorylation.</title>
        <authorList>
            <person name="Hendriks I.A."/>
            <person name="Lyon D."/>
            <person name="Young C."/>
            <person name="Jensen L.J."/>
            <person name="Vertegaal A.C."/>
            <person name="Nielsen M.L."/>
        </authorList>
    </citation>
    <scope>SUMOYLATION [LARGE SCALE ANALYSIS] AT LYS-445</scope>
    <scope>IDENTIFICATION BY MASS SPECTROMETRY [LARGE SCALE ANALYSIS]</scope>
</reference>
<reference key="26">
    <citation type="journal article" date="2009" name="Ann. Neurol.">
        <title>Mutation in BAG3 causes severe dominant childhood muscular dystrophy.</title>
        <authorList>
            <person name="Selcen D."/>
            <person name="Muntoni F."/>
            <person name="Burton B.K."/>
            <person name="Pegoraro E."/>
            <person name="Sewry C."/>
            <person name="Bite A.V."/>
            <person name="Engel A.G."/>
        </authorList>
    </citation>
    <scope>VARIANT MFM6 LEU-209</scope>
    <scope>INVOLVEMENT IN MFM6</scope>
</reference>
<reference key="27">
    <citation type="journal article" date="2010" name="Neuromuscul. Disord.">
        <title>Inheritance patterns and phenotypic features of myofibrillar myopathy associated with a BAG3 mutation.</title>
        <authorList>
            <person name="Odgerel Z."/>
            <person name="Sarkozy A."/>
            <person name="Lee H.S."/>
            <person name="McKenna C."/>
            <person name="Rankin J."/>
            <person name="Straub V."/>
            <person name="Lochmueller H."/>
            <person name="Paola F."/>
            <person name="D'Amico A."/>
            <person name="Bertini E."/>
            <person name="Bushby K."/>
            <person name="Goldfarb L.G."/>
        </authorList>
    </citation>
    <scope>VARIANT MFM6 LEU-209</scope>
    <scope>INVOLVEMENT IN MFM6</scope>
</reference>
<reference key="28">
    <citation type="journal article" date="2011" name="Am. J. Hum. Genet.">
        <title>Genome-wide studies of copy number variation and exome sequencing identify rare variants in BAG3 as a cause of dilated cardiomyopathy.</title>
        <authorList>
            <person name="Norton N."/>
            <person name="Li D."/>
            <person name="Rieder M.J."/>
            <person name="Siegfried J.D."/>
            <person name="Rampersaud E."/>
            <person name="Zuchner S."/>
            <person name="Mangos S."/>
            <person name="Gonzalez-Quintana J."/>
            <person name="Wang L."/>
            <person name="McGee S."/>
            <person name="Reiser J."/>
            <person name="Martin E."/>
            <person name="Nickerson D.A."/>
            <person name="Hershberger R.E."/>
        </authorList>
    </citation>
    <scope>VARIANTS CMD1HH TRP-71 AND HIS-477</scope>
</reference>
<reference key="29">
    <citation type="journal article" date="2011" name="Eur. Heart J.">
        <title>A genome-wide association study identifies two loci associated with heart failure due to dilated cardiomyopathy.</title>
        <authorList>
            <person name="Villard E."/>
            <person name="Perret C."/>
            <person name="Gary F."/>
            <person name="Proust C."/>
            <person name="Dilanian G."/>
            <person name="Hengstenberg C."/>
            <person name="Ruppert V."/>
            <person name="Arbustini E."/>
            <person name="Wichter T."/>
            <person name="Germain M."/>
            <person name="Dubourg O."/>
            <person name="Tavazzi L."/>
            <person name="Aumont M.C."/>
            <person name="DeGroote P."/>
            <person name="Fauchier L."/>
            <person name="Trochu J.N."/>
            <person name="Gibelin P."/>
            <person name="Aupetit J.F."/>
            <person name="Stark K."/>
            <person name="Erdmann J."/>
            <person name="Hetzer R."/>
            <person name="Roberts A.M."/>
            <person name="Barton P.J."/>
            <person name="Regitz-Zagrosek V."/>
            <person name="Aslam U."/>
            <person name="Duboscq-Bidot L."/>
            <person name="Meyborg M."/>
            <person name="Maisch B."/>
            <person name="Madeira H."/>
            <person name="Waldenstrom A."/>
            <person name="Galve E."/>
            <person name="Cleland J.G."/>
            <person name="Dorent R."/>
            <person name="Roizes G."/>
            <person name="Zeller T."/>
            <person name="Blankenberg S."/>
            <person name="Goodall A.H."/>
            <person name="Cook S."/>
            <person name="Tregouet D.A."/>
            <person name="Tiret L."/>
            <person name="Isnard R."/>
            <person name="Komajda M."/>
            <person name="Charron P."/>
            <person name="Cambien F."/>
        </authorList>
    </citation>
    <scope>VARIANTS GLN-71; LEU-77; PHE-94; SER-115; ARG-151; THR-155; SER-380 AND LEU-407</scope>
    <scope>VARIANTS CMD1HH LYS-455 AND MET-468</scope>
</reference>
<reference key="30">
    <citation type="journal article" date="2011" name="Hum. Mutat.">
        <title>Dilated cardiomyopathy-associated BAG3 mutations impair Z-disc assembly and enhance sensitivity to apoptosis in cardiomyocytes.</title>
        <authorList>
            <person name="Arimura T."/>
            <person name="Ishikawa T."/>
            <person name="Nunoda S."/>
            <person name="Kawai S."/>
            <person name="Kimura A."/>
        </authorList>
    </citation>
    <scope>VARIANTS CMD1HH TRP-218 AND PRO-462</scope>
    <scope>VARIANTS TRP-258; ASN-300; LEU-407 AND ASP-553</scope>
</reference>
<reference key="31">
    <citation type="journal article" date="2012" name="Clin. Genet.">
        <title>BAG3-related myofibrillar myopathy in a Chinese family.</title>
        <authorList>
            <person name="Lee H."/>
            <person name="Cherk S."/>
            <person name="Chan S."/>
            <person name="Wong S."/>
            <person name="Tong T."/>
            <person name="Ho W."/>
            <person name="Chan A."/>
            <person name="Lee K."/>
            <person name="Mak C."/>
        </authorList>
    </citation>
    <scope>VARIANT MFM6 LEU-209</scope>
    <scope>VARIANT TRP-258</scope>
    <scope>INVOLVEMENT IN MFM6</scope>
</reference>
<reference key="32">
    <citation type="journal article" date="2012" name="J. Peripher. Nerv. Syst.">
        <title>BAG3 mutations: another cause of giant axonal neuropathy.</title>
        <authorList>
            <person name="Jaffer F."/>
            <person name="Murphy S.M."/>
            <person name="Scoto M."/>
            <person name="Healy E."/>
            <person name="Rossor A.M."/>
            <person name="Brandner S."/>
            <person name="Phadke R."/>
            <person name="Selcen D."/>
            <person name="Jungbluth H."/>
            <person name="Muntoni F."/>
            <person name="Reilly M.M."/>
        </authorList>
    </citation>
    <scope>VARIANT MFM6 LEU-209</scope>
    <scope>INVOLVEMENT IN MFM6</scope>
</reference>
<reference key="33">
    <citation type="journal article" date="2014" name="Orphanet J. Rare Dis.">
        <title>Unusual multisystemic involvement and a novel BAG3 mutation revealed by NGS screening in a large cohort of myofibrillar myopathies.</title>
        <authorList>
            <person name="Semmler A.L."/>
            <person name="Sacconi S."/>
            <person name="Bach J.E."/>
            <person name="Liebe C."/>
            <person name="Buermann J."/>
            <person name="Kley R.A."/>
            <person name="Ferbert A."/>
            <person name="Anderheiden R."/>
            <person name="Van den Bergh P."/>
            <person name="Martin J.J."/>
            <person name="De Jonghe P."/>
            <person name="Neuen-Jacob E."/>
            <person name="Mueller O."/>
            <person name="Deschauer M."/>
            <person name="Bergmann M."/>
            <person name="Schroeder J.M."/>
            <person name="Vorgerd M."/>
            <person name="Schulz J.B."/>
            <person name="Weis J."/>
            <person name="Kress W."/>
            <person name="Claeys K.G."/>
        </authorList>
    </citation>
    <scope>VARIANT MFM6 GLN-209</scope>
    <scope>INVOLVEMENT IN MFM6</scope>
</reference>
<reference key="34">
    <citation type="journal article" date="2018" name="J. Neurol. Neurosurg. Psych.">
        <title>Mutations in BAG3 cause adult-onset Charcot-Marie-Tooth disease.</title>
        <authorList>
            <person name="Shy M."/>
            <person name="Rebelo A.P."/>
            <person name="Feely S.M."/>
            <person name="Abreu L.A."/>
            <person name="Tao F."/>
            <person name="Swenson A."/>
            <person name="Bacon C."/>
            <person name="Zuchner S."/>
        </authorList>
    </citation>
    <scope>VARIANT CMT2JJ SER-209</scope>
    <scope>INVOLVEMENT IN CMT2JJ</scope>
</reference>
<reference key="35">
    <citation type="journal article" date="2018" name="Nat. Commun.">
        <title>Myopathy associated BAG3 mutations lead to protein aggregation by stalling Hsp70 networks.</title>
        <authorList>
            <person name="Meister-Broekema M."/>
            <person name="Freilich R."/>
            <person name="Jagadeesan C."/>
            <person name="Rauch J.N."/>
            <person name="Bengoechea R."/>
            <person name="Motley W.W."/>
            <person name="Kuiper E.F.E."/>
            <person name="Minoia M."/>
            <person name="Furtado G.V."/>
            <person name="van Waarde M.A.W.H."/>
            <person name="Bird S.J."/>
            <person name="Rebelo A."/>
            <person name="Zuchner S."/>
            <person name="Pytel P."/>
            <person name="Scherer S.S."/>
            <person name="Morelli F.F."/>
            <person name="Carra S."/>
            <person name="Weihl C.C."/>
            <person name="Bergink S."/>
            <person name="Gestwicki J.E."/>
            <person name="Kampinga H.H."/>
        </authorList>
    </citation>
    <scope>VARIANT MFM6 SER-470</scope>
    <scope>CHARACTERIZATION OF VARIANTS MFM6 LEU-209 AND SER-470</scope>
    <scope>INVOLVEMENT IN MFM6</scope>
    <scope>FUNCTION</scope>
    <scope>SUBUNIT</scope>
    <scope>INTERACTION WITH DNAJB1</scope>
</reference>
<reference key="36">
    <citation type="journal article" date="2020" name="J. Neurol.">
        <title>BAG3 p.Pro209Ser mutation identified in a Chinese family with Charcot-Marie-Tooth disease.</title>
        <authorList>
            <person name="Fu J."/>
            <person name="Ma M."/>
            <person name="Song J."/>
            <person name="Pang M."/>
            <person name="Li G."/>
            <person name="Zhang J."/>
        </authorList>
    </citation>
    <scope>VARIANT CMT2JJ SER-209</scope>
    <scope>INVOLVEMENT IN CMT2JJ</scope>
</reference>
<reference key="37">
    <citation type="journal article" date="2020" name="Neuromuscul. Disord.">
        <title>A family with adult-onset myofibrillar myopathy with BAG3 mutation (P470S) presenting with axonal polyneuropathy.</title>
        <authorList>
            <person name="Hamaguchi M."/>
            <person name="Kokubun N."/>
            <person name="Inoue M."/>
            <person name="Komagamine T."/>
            <person name="Aoki R."/>
            <person name="Nishino I."/>
            <person name="Hirata K."/>
        </authorList>
    </citation>
    <scope>VARIANT MFM6 SER-470</scope>
    <scope>INVOLVEMENT IN MFM6</scope>
</reference>
<reference key="38">
    <citation type="journal article" date="2024" name="J. Neurol.">
        <title>Distal hereditary motor neuronopathy as a new phenotype associated with variants in BAG3.</title>
        <authorList>
            <person name="de Fuenmayor-Fernandez de la Hoz C.P."/>
            <person name="Lupo V."/>
            <person name="Bermejo-Guerrero L."/>
            <person name="Martin-Jimenez P."/>
            <person name="Hernandez-Lain A."/>
            <person name="Olive M."/>
            <person name="Gallardo E."/>
            <person name="Esteban-Perez J."/>
            <person name="Espinos C."/>
            <person name="Dominguez-Gonzalez C."/>
        </authorList>
    </citation>
    <scope>INVOLVEMENT IN HMND15</scope>
</reference>
<gene>
    <name type="primary">BAG3</name>
    <name type="synonym">BIS</name>
</gene>
<feature type="initiator methionine" description="Removed" evidence="32">
    <location>
        <position position="1"/>
    </location>
</feature>
<feature type="chain" id="PRO_0000088868" description="BAG family molecular chaperone regulator 3">
    <location>
        <begin position="2"/>
        <end position="575"/>
    </location>
</feature>
<feature type="domain" description="WW 1" evidence="2">
    <location>
        <begin position="20"/>
        <end position="54"/>
    </location>
</feature>
<feature type="domain" description="WW 2" evidence="2">
    <location>
        <begin position="124"/>
        <end position="154"/>
    </location>
</feature>
<feature type="domain" description="BAG" evidence="3">
    <location>
        <begin position="421"/>
        <end position="498"/>
    </location>
</feature>
<feature type="region of interest" description="Disordered" evidence="4">
    <location>
        <begin position="1"/>
        <end position="92"/>
    </location>
</feature>
<feature type="region of interest" description="Disordered" evidence="4">
    <location>
        <begin position="123"/>
        <end position="200"/>
    </location>
</feature>
<feature type="region of interest" description="Disordered" evidence="4">
    <location>
        <begin position="240"/>
        <end position="421"/>
    </location>
</feature>
<feature type="region of interest" description="Disordered" evidence="4">
    <location>
        <begin position="532"/>
        <end position="575"/>
    </location>
</feature>
<feature type="compositionally biased region" description="Basic and acidic residues" evidence="4">
    <location>
        <begin position="72"/>
        <end position="83"/>
    </location>
</feature>
<feature type="compositionally biased region" description="Polar residues" evidence="4">
    <location>
        <begin position="132"/>
        <end position="148"/>
    </location>
</feature>
<feature type="compositionally biased region" description="Low complexity" evidence="4">
    <location>
        <begin position="155"/>
        <end position="198"/>
    </location>
</feature>
<feature type="compositionally biased region" description="Basic and acidic residues" evidence="4">
    <location>
        <begin position="250"/>
        <end position="259"/>
    </location>
</feature>
<feature type="compositionally biased region" description="Polar residues" evidence="4">
    <location>
        <begin position="266"/>
        <end position="288"/>
    </location>
</feature>
<feature type="compositionally biased region" description="Pro residues" evidence="4">
    <location>
        <begin position="327"/>
        <end position="336"/>
    </location>
</feature>
<feature type="compositionally biased region" description="Pro residues" evidence="4">
    <location>
        <begin position="367"/>
        <end position="381"/>
    </location>
</feature>
<feature type="compositionally biased region" description="Low complexity" evidence="4">
    <location>
        <begin position="532"/>
        <end position="559"/>
    </location>
</feature>
<feature type="compositionally biased region" description="Polar residues" evidence="4">
    <location>
        <begin position="560"/>
        <end position="569"/>
    </location>
</feature>
<feature type="modified residue" description="N-acetylserine" evidence="32">
    <location>
        <position position="2"/>
    </location>
</feature>
<feature type="modified residue" description="Phosphoserine" evidence="1">
    <location>
        <position position="136"/>
    </location>
</feature>
<feature type="modified residue" description="Omega-N-methylarginine" evidence="1">
    <location>
        <position position="139"/>
    </location>
</feature>
<feature type="modified residue" description="Phosphoserine" evidence="33">
    <location>
        <position position="173"/>
    </location>
</feature>
<feature type="modified residue" description="Phosphoserine" evidence="32">
    <location>
        <position position="198"/>
    </location>
</feature>
<feature type="modified residue" description="Omega-N-methylarginine" evidence="1">
    <location>
        <position position="261"/>
    </location>
</feature>
<feature type="modified residue" description="Phosphoserine" evidence="33">
    <location>
        <position position="269"/>
    </location>
</feature>
<feature type="modified residue" description="Phosphoserine" evidence="30">
    <location>
        <position position="274"/>
    </location>
</feature>
<feature type="modified residue" description="Phosphoserine" evidence="30 33">
    <location>
        <position position="275"/>
    </location>
</feature>
<feature type="modified residue" description="Phosphoserine" evidence="30 33">
    <location>
        <position position="279"/>
    </location>
</feature>
<feature type="modified residue" description="Phosphothreonine" evidence="30 33">
    <location>
        <position position="285"/>
    </location>
</feature>
<feature type="modified residue" description="Phosphoserine" evidence="30 32 33">
    <location>
        <position position="289"/>
    </location>
</feature>
<feature type="modified residue" description="Phosphoserine" evidence="30 33">
    <location>
        <position position="291"/>
    </location>
</feature>
<feature type="modified residue" description="Phosphoserine" evidence="30 31 32 33 34">
    <location>
        <position position="377"/>
    </location>
</feature>
<feature type="modified residue" description="Phosphoserine" evidence="34">
    <location>
        <position position="385"/>
    </location>
</feature>
<feature type="modified residue" description="Phosphoserine" evidence="30 32">
    <location>
        <position position="386"/>
    </location>
</feature>
<feature type="modified residue" description="Phosphothreonine" evidence="30 32 33">
    <location>
        <position position="406"/>
    </location>
</feature>
<feature type="cross-link" description="Glycyl lysine isopeptide (Lys-Gly) (interchain with G-Cter in SUMO1); alternate" evidence="35">
    <location>
        <position position="445"/>
    </location>
</feature>
<feature type="cross-link" description="Glycyl lysine isopeptide (Lys-Gly) (interchain with G-Cter in SUMO2); alternate" evidence="36">
    <location>
        <position position="445"/>
    </location>
</feature>
<feature type="sequence variant" id="VAR_048344" description="In dbSNP:rs35434411." evidence="12">
    <original>R</original>
    <variation>Q</variation>
    <location>
        <position position="71"/>
    </location>
</feature>
<feature type="sequence variant" id="VAR_065479" description="In CMD1HH; dbSNP:rs387906874." evidence="10">
    <original>R</original>
    <variation>W</variation>
    <location>
        <position position="71"/>
    </location>
</feature>
<feature type="sequence variant" id="VAR_066777" description="In dbSNP:rs141355480." evidence="12">
    <original>P</original>
    <variation>L</variation>
    <location>
        <position position="77"/>
    </location>
</feature>
<feature type="sequence variant" id="VAR_066778" description="In dbSNP:rs145393807." evidence="12">
    <original>I</original>
    <variation>F</variation>
    <location>
        <position position="94"/>
    </location>
</feature>
<feature type="sequence variant" id="VAR_066779" description="In dbSNP:rs774241343." evidence="12">
    <original>P</original>
    <variation>S</variation>
    <location>
        <position position="115"/>
    </location>
</feature>
<feature type="sequence variant" id="VAR_048345" description="In dbSNP:rs2234962." evidence="5 12">
    <original>C</original>
    <variation>R</variation>
    <location>
        <position position="151"/>
    </location>
</feature>
<feature type="sequence variant" id="VAR_066780" description="In dbSNP:rs61756328." evidence="12">
    <original>A</original>
    <variation>T</variation>
    <location>
        <position position="155"/>
    </location>
</feature>
<feature type="sequence variant" id="VAR_063089" description="In MFM6; pathogenic; affects function in protein folding; results in decreased adenyl-nucleotide exchange factor activity; results in aggregation of HSP70 chaperones and proteasomal substrates; reduced thermal stability; affects quaternary structure and the mutant forms non-native oligomers; dbSNP:rs121918312." evidence="7 9 11 15 24">
    <original>P</original>
    <variation>L</variation>
    <location>
        <position position="209"/>
    </location>
</feature>
<feature type="sequence variant" id="VAR_090425" description="In MFM6; likely pathogenic." evidence="18">
    <original>P</original>
    <variation>Q</variation>
    <location>
        <position position="209"/>
    </location>
</feature>
<feature type="sequence variant" id="VAR_090426" description="In CMT2JJ; likely pathogenic." evidence="23 25">
    <original>P</original>
    <variation>S</variation>
    <location>
        <position position="209"/>
    </location>
</feature>
<feature type="sequence variant" id="VAR_066781" description="In CMD1HH; dbSNP:rs397514506." evidence="13">
    <original>R</original>
    <variation>W</variation>
    <location>
        <position position="218"/>
    </location>
</feature>
<feature type="sequence variant" id="VAR_066782" description="In dbSNP:rs117671123." evidence="11 13">
    <original>R</original>
    <variation>W</variation>
    <location>
        <position position="258"/>
    </location>
</feature>
<feature type="sequence variant" id="VAR_066783" description="In dbSNP:rs78439745." evidence="13">
    <original>D</original>
    <variation>N</variation>
    <location>
        <position position="300"/>
    </location>
</feature>
<feature type="sequence variant" id="VAR_066784" description="In dbSNP:rs144692954." evidence="12">
    <original>P</original>
    <variation>S</variation>
    <location>
        <position position="380"/>
    </location>
</feature>
<feature type="sequence variant" id="VAR_048346" description="In dbSNP:rs11199064.">
    <original>A</original>
    <variation>V</variation>
    <location>
        <position position="405"/>
    </location>
</feature>
<feature type="sequence variant" id="VAR_048347" description="In dbSNP:rs3858340." evidence="12 13">
    <original>P</original>
    <variation>L</variation>
    <location>
        <position position="407"/>
    </location>
</feature>
<feature type="sequence variant" id="VAR_066785" description="In CMD1HH; dbSNP:rs397516881." evidence="12">
    <original>E</original>
    <variation>K</variation>
    <location>
        <position position="455"/>
    </location>
</feature>
<feature type="sequence variant" id="VAR_066786" description="In CMD1HH; dbSNP:rs397514507." evidence="13">
    <original>L</original>
    <variation>P</variation>
    <location>
        <position position="462"/>
    </location>
</feature>
<feature type="sequence variant" id="VAR_066787" description="In CMD1HH." evidence="12">
    <original>V</original>
    <variation>M</variation>
    <location>
        <position position="468"/>
    </location>
</feature>
<feature type="sequence variant" id="VAR_090427" description="In MFM6; likely pathogenic; results in aggregation of chaperones and proteasomal substrates." evidence="24 26">
    <original>P</original>
    <variation>S</variation>
    <location>
        <position position="470"/>
    </location>
</feature>
<feature type="sequence variant" id="VAR_065480" description="In CMD1HH; dbSNP:rs387906876." evidence="10">
    <original>R</original>
    <variation>H</variation>
    <location>
        <position position="477"/>
    </location>
</feature>
<feature type="sequence variant" id="VAR_066788" description="In dbSNP:rs763530097." evidence="13">
    <original>E</original>
    <variation>D</variation>
    <location>
        <position position="553"/>
    </location>
</feature>
<feature type="mutagenesis site" description="Significant loss of interaction with HSPA8." evidence="20">
    <original>RR</original>
    <variation>AA</variation>
    <location>
        <begin position="480"/>
        <end position="481"/>
    </location>
</feature>
<feature type="sequence conflict" description="In Ref. 1; AAD16122." evidence="29" ref="1">
    <original>Q</original>
    <variation>K</variation>
    <location>
        <position position="227"/>
    </location>
</feature>
<feature type="sequence conflict" description="In Ref. 1; AAD16122." evidence="29" ref="1">
    <original>Q</original>
    <variation>R</variation>
    <location>
        <position position="237"/>
    </location>
</feature>
<feature type="sequence conflict" description="In Ref. 5; CAB70824." evidence="29" ref="5">
    <location>
        <position position="304"/>
    </location>
</feature>
<keyword id="KW-0007">Acetylation</keyword>
<keyword id="KW-0053">Apoptosis</keyword>
<keyword id="KW-0122">Cardiomyopathy</keyword>
<keyword id="KW-0143">Chaperone</keyword>
<keyword id="KW-0144">Charcot-Marie-Tooth disease</keyword>
<keyword id="KW-0963">Cytoplasm</keyword>
<keyword id="KW-0225">Disease variant</keyword>
<keyword id="KW-1017">Isopeptide bond</keyword>
<keyword id="KW-0488">Methylation</keyword>
<keyword id="KW-1060">Myofibrillar myopathy</keyword>
<keyword id="KW-0523">Neurodegeneration</keyword>
<keyword id="KW-0622">Neuropathy</keyword>
<keyword id="KW-0539">Nucleus</keyword>
<keyword id="KW-0597">Phosphoprotein</keyword>
<keyword id="KW-1267">Proteomics identification</keyword>
<keyword id="KW-1185">Reference proteome</keyword>
<keyword id="KW-0677">Repeat</keyword>
<keyword id="KW-0832">Ubl conjugation</keyword>
<evidence type="ECO:0000250" key="1">
    <source>
        <dbReference type="UniProtKB" id="Q9JLV1"/>
    </source>
</evidence>
<evidence type="ECO:0000255" key="2">
    <source>
        <dbReference type="PROSITE-ProRule" id="PRU00224"/>
    </source>
</evidence>
<evidence type="ECO:0000255" key="3">
    <source>
        <dbReference type="PROSITE-ProRule" id="PRU00369"/>
    </source>
</evidence>
<evidence type="ECO:0000256" key="4">
    <source>
        <dbReference type="SAM" id="MobiDB-lite"/>
    </source>
</evidence>
<evidence type="ECO:0000269" key="5">
    <source>
    </source>
</evidence>
<evidence type="ECO:0000269" key="6">
    <source>
    </source>
</evidence>
<evidence type="ECO:0000269" key="7">
    <source>
    </source>
</evidence>
<evidence type="ECO:0000269" key="8">
    <source>
    </source>
</evidence>
<evidence type="ECO:0000269" key="9">
    <source>
    </source>
</evidence>
<evidence type="ECO:0000269" key="10">
    <source>
    </source>
</evidence>
<evidence type="ECO:0000269" key="11">
    <source>
    </source>
</evidence>
<evidence type="ECO:0000269" key="12">
    <source>
    </source>
</evidence>
<evidence type="ECO:0000269" key="13">
    <source>
    </source>
</evidence>
<evidence type="ECO:0000269" key="14">
    <source>
    </source>
</evidence>
<evidence type="ECO:0000269" key="15">
    <source>
    </source>
</evidence>
<evidence type="ECO:0000269" key="16">
    <source>
    </source>
</evidence>
<evidence type="ECO:0000269" key="17">
    <source>
    </source>
</evidence>
<evidence type="ECO:0000269" key="18">
    <source>
    </source>
</evidence>
<evidence type="ECO:0000269" key="19">
    <source>
    </source>
</evidence>
<evidence type="ECO:0000269" key="20">
    <source>
    </source>
</evidence>
<evidence type="ECO:0000269" key="21">
    <source>
    </source>
</evidence>
<evidence type="ECO:0000269" key="22">
    <source>
    </source>
</evidence>
<evidence type="ECO:0000269" key="23">
    <source>
    </source>
</evidence>
<evidence type="ECO:0000269" key="24">
    <source>
    </source>
</evidence>
<evidence type="ECO:0000269" key="25">
    <source>
    </source>
</evidence>
<evidence type="ECO:0000269" key="26">
    <source>
    </source>
</evidence>
<evidence type="ECO:0000269" key="27">
    <source>
    </source>
</evidence>
<evidence type="ECO:0000269" key="28">
    <source>
    </source>
</evidence>
<evidence type="ECO:0000305" key="29"/>
<evidence type="ECO:0007744" key="30">
    <source>
    </source>
</evidence>
<evidence type="ECO:0007744" key="31">
    <source>
    </source>
</evidence>
<evidence type="ECO:0007744" key="32">
    <source>
    </source>
</evidence>
<evidence type="ECO:0007744" key="33">
    <source>
    </source>
</evidence>
<evidence type="ECO:0007744" key="34">
    <source>
    </source>
</evidence>
<evidence type="ECO:0007744" key="35">
    <source>
    </source>
</evidence>
<evidence type="ECO:0007744" key="36">
    <source>
    </source>
</evidence>
<comment type="function">
    <text evidence="5 17 19 20 21 24 28">Co-chaperone and adapter protein that connects different classes of molecular chaperones including heat shock proteins 70 (HSP70s), e.g. HSPA1A/HSP70 or HSPA8/HSC70, and small heat shock proteins (sHSPs), e.g. HSPB8 (PubMed:27884606, PubMed:30559338). Acts as a nucleotide-exchange factor (NEF) promoting the release of ADP from HSP70s, thereby triggering client protein release (PubMed:27884606, PubMed:30559338). Nucleotide release is mediated via BAG3 binding to the nucleotide-binding domain (NBD) of HSP70s, whereas client release is mediated via binding to the substrate-binding domain (SBD) (PubMed:27474739, PubMed:9873016). Has anti-apoptotic activity (PubMed:10597216). Plays a role in the HSF1 nucleocytoplasmic transport (PubMed:26159920).</text>
</comment>
<comment type="subunit">
    <text evidence="5 6 8 14 16 17 19 20 21 22 24 28">Forms a ternary complex with HSPA1A/HSP70 and HSPB8, serving as scaffold subunit (PubMed:27884606). Component of the chaperone-assisted selective autophagy (CASA) complex consisting of BAG3, HSPA8/HSC70, HSPB8 and STUB1/CHIP (PubMed:20060297). Binds to the ATPase domain of HSP70 chaperones (PubMed:9873016). Interacts with BCL2 (PubMed:10597216). Interacts with phospholipase C-gamma proteins (PubMed:10980614). Interacts with DNAJB1 and DNAJB6 (PubMed:22366786, PubMed:30559338). Interacts (via BAG domain) with HSF1; this interaction occurs in normal and heat-shocked cells promoting HSF1 nucleocytoplasmic shuttling (PubMed:26159920). Interacts with HSPA8/HSC70 (via NBD) (PubMed:24318877, PubMed:27474739, PubMed:30559338). Interacts with HSPA1A (via NBD) and HSPA1B (via NBD) (PubMed:24318877, PubMed:30559338). Interacts (via WW domain 1) with SYNPO2 (via PPPY motif) (PubMed:23434281). Interacts with HSPB8 (PubMed:28144995, PubMed:30559338).</text>
</comment>
<comment type="interaction">
    <interactant intactId="EBI-747185">
        <id>O95817</id>
    </interactant>
    <interactant intactId="EBI-2875665">
        <id>Q96B67</id>
        <label>ARRDC3</label>
    </interactant>
    <organismsDiffer>false</organismsDiffer>
    <experiments>10</experiments>
</comment>
<comment type="interaction">
    <interactant intactId="EBI-747185">
        <id>O95817</id>
    </interactant>
    <interactant intactId="EBI-11954292">
        <id>Q86V38</id>
        <label>ATN1</label>
    </interactant>
    <organismsDiffer>false</organismsDiffer>
    <experiments>6</experiments>
</comment>
<comment type="interaction">
    <interactant intactId="EBI-747185">
        <id>O95817</id>
    </interactant>
    <interactant intactId="EBI-2483278">
        <id>Q9UHR4</id>
        <label>BAIAP2L1</label>
    </interactant>
    <organismsDiffer>false</organismsDiffer>
    <experiments>3</experiments>
</comment>
<comment type="interaction">
    <interactant intactId="EBI-747185">
        <id>O95817</id>
    </interactant>
    <interactant intactId="EBI-2548012">
        <id>Q9H2G9</id>
        <label>BLZF1</label>
    </interactant>
    <organismsDiffer>false</organismsDiffer>
    <experiments>3</experiments>
</comment>
<comment type="interaction">
    <interactant intactId="EBI-747185">
        <id>O95817</id>
    </interactant>
    <interactant intactId="EBI-18924329">
        <id>Q96IK1-2</id>
        <label>BOD1</label>
    </interactant>
    <organismsDiffer>false</organismsDiffer>
    <experiments>3</experiments>
</comment>
<comment type="interaction">
    <interactant intactId="EBI-747185">
        <id>O95817</id>
    </interactant>
    <interactant intactId="EBI-355710">
        <id>P48643</id>
        <label>CCT5</label>
    </interactant>
    <organismsDiffer>false</organismsDiffer>
    <experiments>3</experiments>
</comment>
<comment type="interaction">
    <interactant intactId="EBI-747185">
        <id>O95817</id>
    </interactant>
    <interactant intactId="EBI-11088043">
        <id>Q16630-2</id>
        <label>CPSF6</label>
    </interactant>
    <organismsDiffer>false</organismsDiffer>
    <experiments>3</experiments>
</comment>
<comment type="interaction">
    <interactant intactId="EBI-747185">
        <id>O95817</id>
    </interactant>
    <interactant intactId="EBI-6875961">
        <id>P02489</id>
        <label>CRYAA</label>
    </interactant>
    <organismsDiffer>false</organismsDiffer>
    <experiments>4</experiments>
</comment>
<comment type="interaction">
    <interactant intactId="EBI-747185">
        <id>O95817</id>
    </interactant>
    <interactant intactId="EBI-751587">
        <id>Q9GZU7</id>
        <label>CTDSP1</label>
    </interactant>
    <organismsDiffer>false</organismsDiffer>
    <experiments>3</experiments>
</comment>
<comment type="interaction">
    <interactant intactId="EBI-747185">
        <id>O95817</id>
    </interactant>
    <interactant intactId="EBI-3867333">
        <id>A8MQ03</id>
        <label>CYSRT1</label>
    </interactant>
    <organismsDiffer>false</organismsDiffer>
    <experiments>3</experiments>
</comment>
<comment type="interaction">
    <interactant intactId="EBI-747185">
        <id>O95817</id>
    </interactant>
    <interactant intactId="EBI-12867082">
        <id>Q9H1C7</id>
        <label>CYSTM1</label>
    </interactant>
    <organismsDiffer>false</organismsDiffer>
    <experiments>3</experiments>
</comment>
<comment type="interaction">
    <interactant intactId="EBI-747185">
        <id>O95817</id>
    </interactant>
    <interactant intactId="EBI-724310">
        <id>Q15038</id>
        <label>DAZAP2</label>
    </interactant>
    <organismsDiffer>false</organismsDiffer>
    <experiments>9</experiments>
</comment>
<comment type="interaction">
    <interactant intactId="EBI-747185">
        <id>O95817</id>
    </interactant>
    <interactant intactId="EBI-346547">
        <id>P50570</id>
        <label>DNM2</label>
    </interactant>
    <organismsDiffer>false</organismsDiffer>
    <experiments>3</experiments>
</comment>
<comment type="interaction">
    <interactant intactId="EBI-747185">
        <id>O95817</id>
    </interactant>
    <interactant intactId="EBI-2340258">
        <id>Q8N9I9</id>
        <label>DTX3</label>
    </interactant>
    <organismsDiffer>false</organismsDiffer>
    <experiments>3</experiments>
</comment>
<comment type="interaction">
    <interactant intactId="EBI-747185">
        <id>O95817</id>
    </interactant>
    <interactant intactId="EBI-10185025">
        <id>Q86TH3</id>
        <label>DVL1</label>
    </interactant>
    <organismsDiffer>false</organismsDiffer>
    <experiments>7</experiments>
</comment>
<comment type="interaction">
    <interactant intactId="EBI-747185">
        <id>O95817</id>
    </interactant>
    <interactant intactId="EBI-356015">
        <id>Q14204</id>
        <label>DYNC1H1</label>
    </interactant>
    <organismsDiffer>false</organismsDiffer>
    <experiments>3</experiments>
</comment>
<comment type="interaction">
    <interactant intactId="EBI-747185">
        <id>O95817</id>
    </interactant>
    <interactant intactId="EBI-19949420">
        <id>Q05215</id>
        <label>EGR4</label>
    </interactant>
    <organismsDiffer>false</organismsDiffer>
    <experiments>3</experiments>
</comment>
<comment type="interaction">
    <interactant intactId="EBI-747185">
        <id>O95817</id>
    </interactant>
    <interactant intactId="EBI-12807776">
        <id>O00167-2</id>
        <label>EYA2</label>
    </interactant>
    <organismsDiffer>false</organismsDiffer>
    <experiments>4</experiments>
</comment>
<comment type="interaction">
    <interactant intactId="EBI-747185">
        <id>O95817</id>
    </interactant>
    <interactant intactId="EBI-12193763">
        <id>A1KXE4-2</id>
        <label>FAM168B</label>
    </interactant>
    <organismsDiffer>false</organismsDiffer>
    <experiments>3</experiments>
</comment>
<comment type="interaction">
    <interactant intactId="EBI-747185">
        <id>O95817</id>
    </interactant>
    <interactant intactId="EBI-11320806">
        <id>Q9NU39</id>
        <label>FOXD4L1</label>
    </interactant>
    <organismsDiffer>false</organismsDiffer>
    <experiments>3</experiments>
</comment>
<comment type="interaction">
    <interactant intactId="EBI-747185">
        <id>O95817</id>
    </interactant>
    <interactant intactId="EBI-10259069">
        <id>Q86UU5</id>
        <label>GGN</label>
    </interactant>
    <organismsDiffer>false</organismsDiffer>
    <experiments>3</experiments>
</comment>
<comment type="interaction">
    <interactant intactId="EBI-747185">
        <id>O95817</id>
    </interactant>
    <interactant intactId="EBI-12232117">
        <id>Q8NEA6-2</id>
        <label>GLIS3</label>
    </interactant>
    <organismsDiffer>false</organismsDiffer>
    <experiments>3</experiments>
</comment>
<comment type="interaction">
    <interactant intactId="EBI-747185">
        <id>O95817</id>
    </interactant>
    <interactant intactId="EBI-12057631">
        <id>A0A087WSW0</id>
        <label>HELT</label>
    </interactant>
    <organismsDiffer>false</organismsDiffer>
    <experiments>3</experiments>
</comment>
<comment type="interaction">
    <interactant intactId="EBI-747185">
        <id>O95817</id>
    </interactant>
    <interactant intactId="EBI-10289199">
        <id>Q96IS6</id>
        <label>HSPA8</label>
    </interactant>
    <organismsDiffer>false</organismsDiffer>
    <experiments>3</experiments>
</comment>
<comment type="interaction">
    <interactant intactId="EBI-747185">
        <id>O95817</id>
    </interactant>
    <interactant intactId="EBI-352682">
        <id>P04792</id>
        <label>HSPB1</label>
    </interactant>
    <organismsDiffer>false</organismsDiffer>
    <experiments>7</experiments>
</comment>
<comment type="interaction">
    <interactant intactId="EBI-747185">
        <id>O95817</id>
    </interactant>
    <interactant intactId="EBI-739395">
        <id>Q16082</id>
        <label>HSPB2</label>
    </interactant>
    <organismsDiffer>false</organismsDiffer>
    <experiments>5</experiments>
</comment>
<comment type="interaction">
    <interactant intactId="EBI-747185">
        <id>O95817</id>
    </interactant>
    <interactant intactId="EBI-739361">
        <id>Q9UBY9</id>
        <label>HSPB7</label>
    </interactant>
    <organismsDiffer>false</organismsDiffer>
    <experiments>3</experiments>
</comment>
<comment type="interaction">
    <interactant intactId="EBI-747185">
        <id>O95817</id>
    </interactant>
    <interactant intactId="EBI-739074">
        <id>Q9UJY1</id>
        <label>HSPB8</label>
    </interactant>
    <organismsDiffer>false</organismsDiffer>
    <experiments>13</experiments>
</comment>
<comment type="interaction">
    <interactant intactId="EBI-747185">
        <id>O95817</id>
    </interactant>
    <interactant intactId="EBI-6509505">
        <id>Q0VD86</id>
        <label>INCA1</label>
    </interactant>
    <organismsDiffer>false</organismsDiffer>
    <experiments>3</experiments>
</comment>
<comment type="interaction">
    <interactant intactId="EBI-747185">
        <id>O95817</id>
    </interactant>
    <interactant intactId="EBI-742916">
        <id>Q8WZ19</id>
        <label>KCTD13</label>
    </interactant>
    <organismsDiffer>false</organismsDiffer>
    <experiments>3</experiments>
</comment>
<comment type="interaction">
    <interactant intactId="EBI-747185">
        <id>O95817</id>
    </interactant>
    <interactant intactId="EBI-2432309">
        <id>Q92876</id>
        <label>KLK6</label>
    </interactant>
    <organismsDiffer>false</organismsDiffer>
    <experiments>3</experiments>
</comment>
<comment type="interaction">
    <interactant intactId="EBI-747185">
        <id>O95817</id>
    </interactant>
    <interactant intactId="EBI-739546">
        <id>Q96PV6</id>
        <label>LENG8</label>
    </interactant>
    <organismsDiffer>false</organismsDiffer>
    <experiments>3</experiments>
</comment>
<comment type="interaction">
    <interactant intactId="EBI-747185">
        <id>O95817</id>
    </interactant>
    <interactant intactId="EBI-725647">
        <id>Q99732</id>
        <label>LITAF</label>
    </interactant>
    <organismsDiffer>false</organismsDiffer>
    <experiments>7</experiments>
</comment>
<comment type="interaction">
    <interactant intactId="EBI-747185">
        <id>O95817</id>
    </interactant>
    <interactant intactId="EBI-5323863">
        <id>Q5S007</id>
        <label>LRRK2</label>
    </interactant>
    <organismsDiffer>false</organismsDiffer>
    <experiments>2</experiments>
</comment>
<comment type="interaction">
    <interactant intactId="EBI-747185">
        <id>O95817</id>
    </interactant>
    <interactant intactId="EBI-716006">
        <id>Q9Y5V3</id>
        <label>MAGED1</label>
    </interactant>
    <organismsDiffer>false</organismsDiffer>
    <experiments>6</experiments>
</comment>
<comment type="interaction">
    <interactant intactId="EBI-747185">
        <id>O95817</id>
    </interactant>
    <interactant intactId="EBI-724076">
        <id>Q99750</id>
        <label>MDFI</label>
    </interactant>
    <organismsDiffer>false</organismsDiffer>
    <experiments>3</experiments>
</comment>
<comment type="interaction">
    <interactant intactId="EBI-747185">
        <id>O95817</id>
    </interactant>
    <interactant intactId="EBI-1051875">
        <id>Q15773</id>
        <label>MLF2</label>
    </interactant>
    <organismsDiffer>false</organismsDiffer>
    <experiments>4</experiments>
</comment>
<comment type="interaction">
    <interactant intactId="EBI-747185">
        <id>O95817</id>
    </interactant>
    <interactant intactId="EBI-720441">
        <id>Q96DV4</id>
        <label>MRPL38</label>
    </interactant>
    <organismsDiffer>false</organismsDiffer>
    <experiments>3</experiments>
</comment>
<comment type="interaction">
    <interactant intactId="EBI-747185">
        <id>O95817</id>
    </interactant>
    <interactant intactId="EBI-475646">
        <id>P07196</id>
        <label>NEFL</label>
    </interactant>
    <organismsDiffer>false</organismsDiffer>
    <experiments>3</experiments>
</comment>
<comment type="interaction">
    <interactant intactId="EBI-747185">
        <id>O95817</id>
    </interactant>
    <interactant intactId="EBI-2796690">
        <id>Q86XR2</id>
        <label>NIBAN3</label>
    </interactant>
    <organismsDiffer>false</organismsDiffer>
    <experiments>3</experiments>
</comment>
<comment type="interaction">
    <interactant intactId="EBI-747185">
        <id>O95817</id>
    </interactant>
    <interactant intactId="EBI-17490746">
        <id>A8MTQ0</id>
        <label>NOTO</label>
    </interactant>
    <organismsDiffer>false</organismsDiffer>
    <experiments>3</experiments>
</comment>
<comment type="interaction">
    <interactant intactId="EBI-747185">
        <id>O95817</id>
    </interactant>
    <interactant intactId="EBI-11952806">
        <id>Q13133-3</id>
        <label>NR1H3</label>
    </interactant>
    <organismsDiffer>false</organismsDiffer>
    <experiments>3</experiments>
</comment>
<comment type="interaction">
    <interactant intactId="EBI-747185">
        <id>O95817</id>
    </interactant>
    <interactant intactId="EBI-1056510">
        <id>Q9NPF4</id>
        <label>OSGEP</label>
    </interactant>
    <organismsDiffer>false</organismsDiffer>
    <experiments>3</experiments>
</comment>
<comment type="interaction">
    <interactant intactId="EBI-747185">
        <id>O95817</id>
    </interactant>
    <interactant intactId="EBI-742764">
        <id>O76083</id>
        <label>PDE9A</label>
    </interactant>
    <organismsDiffer>false</organismsDiffer>
    <experiments>3</experiments>
</comment>
<comment type="interaction">
    <interactant intactId="EBI-747185">
        <id>O95817</id>
    </interactant>
    <interactant intactId="EBI-11524542">
        <id>O76083-2</id>
        <label>PDE9A</label>
    </interactant>
    <organismsDiffer>false</organismsDiffer>
    <experiments>3</experiments>
</comment>
<comment type="interaction">
    <interactant intactId="EBI-747185">
        <id>O95817</id>
    </interactant>
    <interactant intactId="EBI-350517">
        <id>Q9NR12</id>
        <label>PDLIM7</label>
    </interactant>
    <organismsDiffer>false</organismsDiffer>
    <experiments>7</experiments>
</comment>
<comment type="interaction">
    <interactant intactId="EBI-747185">
        <id>O95817</id>
    </interactant>
    <interactant intactId="EBI-1043580">
        <id>Q9BRX2</id>
        <label>PELO</label>
    </interactant>
    <organismsDiffer>false</organismsDiffer>
    <experiments>3</experiments>
</comment>
<comment type="interaction">
    <interactant intactId="EBI-747185">
        <id>O95817</id>
    </interactant>
    <interactant intactId="EBI-10232538">
        <id>Q8WWB5</id>
        <label>PIH1D2</label>
    </interactant>
    <organismsDiffer>false</organismsDiffer>
    <experiments>3</experiments>
</comment>
<comment type="interaction">
    <interactant intactId="EBI-747185">
        <id>O95817</id>
    </interactant>
    <interactant intactId="EBI-726466">
        <id>O15496</id>
        <label>PLA2G10</label>
    </interactant>
    <organismsDiffer>false</organismsDiffer>
    <experiments>3</experiments>
</comment>
<comment type="interaction">
    <interactant intactId="EBI-747185">
        <id>O95817</id>
    </interactant>
    <interactant intactId="EBI-12832742">
        <id>Q9UF11-2</id>
        <label>PLEKHB1</label>
    </interactant>
    <organismsDiffer>false</organismsDiffer>
    <experiments>3</experiments>
</comment>
<comment type="interaction">
    <interactant intactId="EBI-747185">
        <id>O95817</id>
    </interactant>
    <interactant intactId="EBI-11320284">
        <id>Q9NQX0</id>
        <label>PRDM6</label>
    </interactant>
    <organismsDiffer>false</organismsDiffer>
    <experiments>3</experiments>
</comment>
<comment type="interaction">
    <interactant intactId="EBI-747185">
        <id>O95817</id>
    </interactant>
    <interactant intactId="EBI-2805516">
        <id>P31321</id>
        <label>PRKAR1B</label>
    </interactant>
    <organismsDiffer>false</organismsDiffer>
    <experiments>3</experiments>
</comment>
<comment type="interaction">
    <interactant intactId="EBI-747185">
        <id>O95817</id>
    </interactant>
    <interactant intactId="EBI-11959565">
        <id>Q9NV39</id>
        <label>PRR34</label>
    </interactant>
    <organismsDiffer>false</organismsDiffer>
    <experiments>3</experiments>
</comment>
<comment type="interaction">
    <interactant intactId="EBI-747185">
        <id>O95817</id>
    </interactant>
    <interactant intactId="EBI-2860264">
        <id>Q16825</id>
        <label>PTPN21</label>
    </interactant>
    <organismsDiffer>false</organismsDiffer>
    <experiments>3</experiments>
</comment>
<comment type="interaction">
    <interactant intactId="EBI-747185">
        <id>O95817</id>
    </interactant>
    <interactant intactId="EBI-620823">
        <id>Q09028</id>
        <label>RBBP4</label>
    </interactant>
    <organismsDiffer>false</organismsDiffer>
    <experiments>3</experiments>
</comment>
<comment type="interaction">
    <interactant intactId="EBI-747185">
        <id>O95817</id>
    </interactant>
    <interactant intactId="EBI-13382642">
        <id>Q9H6L5-2</id>
        <label>RETREG1</label>
    </interactant>
    <organismsDiffer>false</organismsDiffer>
    <experiments>3</experiments>
</comment>
<comment type="interaction">
    <interactant intactId="EBI-747185">
        <id>O95817</id>
    </interactant>
    <interactant intactId="EBI-12001422">
        <id>Q01196-8</id>
        <label>RUNX1</label>
    </interactant>
    <organismsDiffer>false</organismsDiffer>
    <experiments>3</experiments>
</comment>
<comment type="interaction">
    <interactant intactId="EBI-747185">
        <id>O95817</id>
    </interactant>
    <interactant intactId="EBI-632609">
        <id>O75446</id>
        <label>SAP30</label>
    </interactant>
    <organismsDiffer>false</organismsDiffer>
    <experiments>3</experiments>
</comment>
<comment type="interaction">
    <interactant intactId="EBI-747185">
        <id>O95817</id>
    </interactant>
    <interactant intactId="EBI-348469">
        <id>Q15427</id>
        <label>SF3B4</label>
    </interactant>
    <organismsDiffer>false</organismsDiffer>
    <experiments>6</experiments>
</comment>
<comment type="interaction">
    <interactant intactId="EBI-747185">
        <id>O95817</id>
    </interactant>
    <interactant intactId="EBI-12037847">
        <id>Q6ZSJ9</id>
        <label>SHISA6</label>
    </interactant>
    <organismsDiffer>false</organismsDiffer>
    <experiments>5</experiments>
</comment>
<comment type="interaction">
    <interactant intactId="EBI-747185">
        <id>O95817</id>
    </interactant>
    <interactant intactId="EBI-11522811">
        <id>Q8IUQ4-2</id>
        <label>SIAH1</label>
    </interactant>
    <organismsDiffer>false</organismsDiffer>
    <experiments>3</experiments>
</comment>
<comment type="interaction">
    <interactant intactId="EBI-747185">
        <id>O95817</id>
    </interactant>
    <interactant intactId="EBI-307104">
        <id>Q13501</id>
        <label>SQSTM1</label>
    </interactant>
    <organismsDiffer>false</organismsDiffer>
    <experiments>3</experiments>
</comment>
<comment type="interaction">
    <interactant intactId="EBI-747185">
        <id>O95817</id>
    </interactant>
    <interactant intactId="EBI-357085">
        <id>Q9UNE7</id>
        <label>STUB1</label>
    </interactant>
    <organismsDiffer>false</organismsDiffer>
    <experiments>3</experiments>
</comment>
<comment type="interaction">
    <interactant intactId="EBI-747185">
        <id>O95817</id>
    </interactant>
    <interactant intactId="EBI-13092532">
        <id>Q6DHY5</id>
        <label>TBC1D3G</label>
    </interactant>
    <organismsDiffer>false</organismsDiffer>
    <experiments>3</experiments>
</comment>
<comment type="interaction">
    <interactant intactId="EBI-747185">
        <id>O95817</id>
    </interactant>
    <interactant intactId="EBI-717399">
        <id>Q9BSI4</id>
        <label>TINF2</label>
    </interactant>
    <organismsDiffer>false</organismsDiffer>
    <experiments>2</experiments>
</comment>
<comment type="interaction">
    <interactant intactId="EBI-747185">
        <id>O95817</id>
    </interactant>
    <interactant intactId="EBI-10276729">
        <id>Q8WUU8</id>
        <label>TMEM174</label>
    </interactant>
    <organismsDiffer>false</organismsDiffer>
    <experiments>3</experiments>
</comment>
<comment type="interaction">
    <interactant intactId="EBI-747185">
        <id>O95817</id>
    </interactant>
    <interactant intactId="EBI-11952721">
        <id>Q05BL1</id>
        <label>TP53BP2</label>
    </interactant>
    <organismsDiffer>false</organismsDiffer>
    <experiments>3</experiments>
</comment>
<comment type="interaction">
    <interactant intactId="EBI-747185">
        <id>O95817</id>
    </interactant>
    <interactant intactId="EBI-492476">
        <id>Q96RU7</id>
        <label>TRIB3</label>
    </interactant>
    <organismsDiffer>false</organismsDiffer>
    <experiments>3</experiments>
</comment>
<comment type="interaction">
    <interactant intactId="EBI-747185">
        <id>O95817</id>
    </interactant>
    <interactant intactId="EBI-719493">
        <id>P14373</id>
        <label>TRIM27</label>
    </interactant>
    <organismsDiffer>false</organismsDiffer>
    <experiments>3</experiments>
</comment>
<comment type="interaction">
    <interactant intactId="EBI-747185">
        <id>O95817</id>
    </interactant>
    <interactant intactId="EBI-742327">
        <id>Q15654</id>
        <label>TRIP6</label>
    </interactant>
    <organismsDiffer>false</organismsDiffer>
    <experiments>3</experiments>
</comment>
<comment type="interaction">
    <interactant intactId="EBI-747185">
        <id>O95817</id>
    </interactant>
    <interactant intactId="EBI-12806590">
        <id>Q86WV8</id>
        <label>TSC1</label>
    </interactant>
    <organismsDiffer>false</organismsDiffer>
    <experiments>3</experiments>
</comment>
<comment type="interaction">
    <interactant intactId="EBI-747185">
        <id>O95817</id>
    </interactant>
    <interactant intactId="EBI-12817837">
        <id>Q9H9P5-5</id>
        <label>UNKL</label>
    </interactant>
    <organismsDiffer>false</organismsDiffer>
    <experiments>3</experiments>
</comment>
<comment type="interaction">
    <interactant intactId="EBI-747185">
        <id>O95817</id>
    </interactant>
    <interactant intactId="EBI-4400866">
        <id>Q9H9H4</id>
        <label>VPS37B</label>
    </interactant>
    <organismsDiffer>false</organismsDiffer>
    <experiments>3</experiments>
</comment>
<comment type="interaction">
    <interactant intactId="EBI-747185">
        <id>O95817</id>
    </interactant>
    <interactant intactId="EBI-727055">
        <id>Q969T9</id>
        <label>WBP2</label>
    </interactant>
    <organismsDiffer>false</organismsDiffer>
    <experiments>4</experiments>
</comment>
<comment type="interaction">
    <interactant intactId="EBI-747185">
        <id>O95817</id>
    </interactant>
    <interactant intactId="EBI-720609">
        <id>O76024</id>
        <label>WFS1</label>
    </interactant>
    <organismsDiffer>false</organismsDiffer>
    <experiments>3</experiments>
</comment>
<comment type="interaction">
    <interactant intactId="EBI-747185">
        <id>O95817</id>
    </interactant>
    <interactant intactId="EBI-9088990">
        <id>Q7Z783</id>
    </interactant>
    <organismsDiffer>false</organismsDiffer>
    <experiments>3</experiments>
</comment>
<comment type="interaction">
    <interactant intactId="EBI-747185">
        <id>O95817</id>
    </interactant>
    <interactant intactId="EBI-9356686">
        <id>Q96BE0</id>
    </interactant>
    <organismsDiffer>false</organismsDiffer>
    <experiments>2</experiments>
</comment>
<comment type="subcellular location">
    <subcellularLocation>
        <location evidence="19">Nucleus</location>
    </subcellularLocation>
    <subcellularLocation>
        <location evidence="19">Cytoplasm</location>
    </subcellularLocation>
    <text evidence="19">Colocalizes with HSF1 to the nucleus upon heat stress (PubMed:26159920).</text>
</comment>
<comment type="domain">
    <text evidence="21">The BAG domain interacts with the nucleotide-binding domain (NBD) of HSP70s and is essential for the nucleotide-exchange factor activity.</text>
</comment>
<comment type="disease" evidence="7 9 11 13 15 18 24 26">
    <disease id="DI-02541">
        <name>Myopathy, myofibrillar, 6</name>
        <acronym>MFM6</acronym>
        <description>A form of myofibrillar myopathy, a group of chronic neuromuscular disorders characterized at ultrastructural level by disintegration of the sarcomeric Z disk and myofibrils, and replacement of the normal myofibrillar markings by small dense granules, or larger hyaline masses, or amorphous material. MFM6 is characterized by early-onset of severe, progressive, diffuse muscle weakness associated with cardiomyopathy, severe respiratory insufficiency during adolescence, and a rigid spine in some patients.</description>
        <dbReference type="MIM" id="612954"/>
    </disease>
    <text>The disease is caused by variants affecting the gene represented in this entry.</text>
</comment>
<comment type="disease" evidence="10 12 13">
    <disease id="DI-03042">
        <name>Cardiomyopathy, dilated, 1HH</name>
        <acronym>CMD1HH</acronym>
        <description>A disorder characterized by ventricular dilation and impaired systolic function, resulting in congestive heart failure and arrhythmia. Patients are at risk of premature death.</description>
        <dbReference type="MIM" id="613881"/>
    </disease>
    <text>The disease is caused by variants affecting the gene represented in this entry.</text>
</comment>
<comment type="disease" evidence="27">
    <disease id="DI-06998">
        <name>Neuronopathy, distal hereditary motor, autosomal dominant 15</name>
        <acronym>HMND15</acronym>
        <description>A form of distal hereditary motor neuronopathy, a heterogeneous group of neuromuscular disorders caused by selective degeneration of motor neurons in the anterior horn of the spinal cord, without sensory deficit in the posterior horn. The overall clinical picture consists of a classical distal muscular atrophy syndrome in the legs without clinical sensory loss. Weakness and atrophy may expand to the proximal muscles of the lower limbs and/or to the distal upper limbs. HMND15 is an adult-onset, autosomal dominant form with incomplete penetrance. HMND15 affected individuals exhibit a slowly progressive and symmetric distal weakness and atrophy of lower limb muscles, along with absent Achille reflexes. Sensory deficits are not present.</description>
        <dbReference type="MIM" id="621094"/>
    </disease>
    <text>The disease is caused by variants affecting the gene represented in this entry.</text>
</comment>
<comment type="disease" evidence="23 25">
    <disease id="DI-06999">
        <name>Charcot-Marie-Tooth disease, axonal, type 2JJ</name>
        <acronym>CMT2JJ</acronym>
        <description>An autosomal dominant, axonal form of Charcot-Marie-Tooth disease, a disorder of the peripheral nervous system, characterized by progressive weakness and atrophy, initially of the peroneal muscles and later of the distal muscles of the arms. Charcot-Marie-Tooth disease is classified in two main groups on the basis of electrophysiologic properties and histopathology: primary peripheral demyelinating neuropathies (designated CMT1 when they are dominantly inherited) and primary peripheral axonal neuropathies (CMT2). Neuropathies of the CMT2 group are characterized by signs of axonal degeneration in the absence of obvious myelin alterations, normal or slightly reduced nerve conduction velocities, and progressive distal muscle weakness and atrophy. CMT2JJ is characterized by adult onset of distal sensory impairment and distal muscle weakness and atrophy predominantly affecting the lower limbs.</description>
        <dbReference type="MIM" id="621095"/>
    </disease>
    <text>The disease is caused by variants affecting the gene represented in this entry.</text>
</comment>
<comment type="online information" name="Atlas of Genetics and Cytogenetics in Oncology and Haematology">
    <link uri="https://atlasgeneticsoncology.org/gene/43160/bag3-(bcl-2-associated-athanogene-3)"/>
</comment>
<proteinExistence type="evidence at protein level"/>
<accession>O95817</accession>
<accession>A8K5L8</accession>
<accession>Q3B763</accession>
<accession>Q9NT20</accession>
<accession>Q9P120</accession>